<gene>
    <name evidence="38 43" type="primary">SLC12A3</name>
    <name evidence="36" type="synonym">NCC</name>
    <name type="synonym">TSC</name>
</gene>
<keyword id="KW-0002">3D-structure</keyword>
<keyword id="KW-0025">Alternative splicing</keyword>
<keyword id="KW-0067">ATP-binding</keyword>
<keyword id="KW-1003">Cell membrane</keyword>
<keyword id="KW-0868">Chloride</keyword>
<keyword id="KW-0225">Disease variant</keyword>
<keyword id="KW-1015">Disulfide bond</keyword>
<keyword id="KW-0325">Glycoprotein</keyword>
<keyword id="KW-0406">Ion transport</keyword>
<keyword id="KW-0472">Membrane</keyword>
<keyword id="KW-0547">Nucleotide-binding</keyword>
<keyword id="KW-0597">Phosphoprotein</keyword>
<keyword id="KW-1267">Proteomics identification</keyword>
<keyword id="KW-1185">Reference proteome</keyword>
<keyword id="KW-0915">Sodium</keyword>
<keyword id="KW-0739">Sodium transport</keyword>
<keyword id="KW-0769">Symport</keyword>
<keyword id="KW-0812">Transmembrane</keyword>
<keyword id="KW-1133">Transmembrane helix</keyword>
<keyword id="KW-0813">Transport</keyword>
<keyword id="KW-0832">Ubl conjugation</keyword>
<reference key="1">
    <citation type="journal article" date="1996" name="Nat. Genet.">
        <title>Gitelman's variant of Bartter's syndrome, inherited hypokalaemic alkalosis, is caused by mutations in the thiazide-sensitive Na-Cl cotransporter.</title>
        <authorList>
            <person name="Simon D.B."/>
            <person name="Nelson-Williams C."/>
            <person name="Bia M.J."/>
            <person name="Ellison D."/>
            <person name="Karet F.E."/>
            <person name="Molina A.M."/>
            <person name="Vaara I."/>
            <person name="Iwata F."/>
            <person name="Cushner H.M."/>
            <person name="Koolen M."/>
            <person name="Gainza F.J."/>
            <person name="Gitelman H.J."/>
            <person name="Lifton R.P."/>
        </authorList>
    </citation>
    <scope>NUCLEOTIDE SEQUENCE [MRNA] (ISOFORM 2)</scope>
    <scope>VARIANTS GTLMNS TRP-209; GLY-264; LEU-349; ARG-421; ASN-486; CYS-496; SER-561 DEL; VAL-588; VAL-630; HIS-655; LEU-655; ARG-741; PRO-850 AND GLN-955</scope>
    <scope>VARIANT THR-728</scope>
    <scope>FUNCTION</scope>
    <scope>ACTIVITY REGULATION</scope>
</reference>
<reference key="2">
    <citation type="journal article" date="1996" name="Genomics">
        <title>Molecular cloning, expression pattern, and chromosomal localization of the human Na-Cl thiazide-sensitive cotransporter (SLC12A3).</title>
        <authorList>
            <person name="Mastroianni N."/>
            <person name="de Fusco M."/>
            <person name="Zollo M."/>
            <person name="Arrigo G."/>
            <person name="Zuffardi O."/>
            <person name="Bettinelli A."/>
            <person name="Ballabio A."/>
            <person name="Casari G."/>
        </authorList>
    </citation>
    <scope>NUCLEOTIDE SEQUENCE [MRNA] (ISOFORM 1)</scope>
    <scope>VARIANT GLY-264</scope>
    <scope>TISSUE SPECIFICITY</scope>
    <source>
        <tissue>Kidney</tissue>
    </source>
</reference>
<reference key="3">
    <citation type="journal article" date="2004" name="Nat. Genet.">
        <title>Complete sequencing and characterization of 21,243 full-length human cDNAs.</title>
        <authorList>
            <person name="Ota T."/>
            <person name="Suzuki Y."/>
            <person name="Nishikawa T."/>
            <person name="Otsuki T."/>
            <person name="Sugiyama T."/>
            <person name="Irie R."/>
            <person name="Wakamatsu A."/>
            <person name="Hayashi K."/>
            <person name="Sato H."/>
            <person name="Nagai K."/>
            <person name="Kimura K."/>
            <person name="Makita H."/>
            <person name="Sekine M."/>
            <person name="Obayashi M."/>
            <person name="Nishi T."/>
            <person name="Shibahara T."/>
            <person name="Tanaka T."/>
            <person name="Ishii S."/>
            <person name="Yamamoto J."/>
            <person name="Saito K."/>
            <person name="Kawai Y."/>
            <person name="Isono Y."/>
            <person name="Nakamura Y."/>
            <person name="Nagahari K."/>
            <person name="Murakami K."/>
            <person name="Yasuda T."/>
            <person name="Iwayanagi T."/>
            <person name="Wagatsuma M."/>
            <person name="Shiratori A."/>
            <person name="Sudo H."/>
            <person name="Hosoiri T."/>
            <person name="Kaku Y."/>
            <person name="Kodaira H."/>
            <person name="Kondo H."/>
            <person name="Sugawara M."/>
            <person name="Takahashi M."/>
            <person name="Kanda K."/>
            <person name="Yokoi T."/>
            <person name="Furuya T."/>
            <person name="Kikkawa E."/>
            <person name="Omura Y."/>
            <person name="Abe K."/>
            <person name="Kamihara K."/>
            <person name="Katsuta N."/>
            <person name="Sato K."/>
            <person name="Tanikawa M."/>
            <person name="Yamazaki M."/>
            <person name="Ninomiya K."/>
            <person name="Ishibashi T."/>
            <person name="Yamashita H."/>
            <person name="Murakawa K."/>
            <person name="Fujimori K."/>
            <person name="Tanai H."/>
            <person name="Kimata M."/>
            <person name="Watanabe M."/>
            <person name="Hiraoka S."/>
            <person name="Chiba Y."/>
            <person name="Ishida S."/>
            <person name="Ono Y."/>
            <person name="Takiguchi S."/>
            <person name="Watanabe S."/>
            <person name="Yosida M."/>
            <person name="Hotuta T."/>
            <person name="Kusano J."/>
            <person name="Kanehori K."/>
            <person name="Takahashi-Fujii A."/>
            <person name="Hara H."/>
            <person name="Tanase T.-O."/>
            <person name="Nomura Y."/>
            <person name="Togiya S."/>
            <person name="Komai F."/>
            <person name="Hara R."/>
            <person name="Takeuchi K."/>
            <person name="Arita M."/>
            <person name="Imose N."/>
            <person name="Musashino K."/>
            <person name="Yuuki H."/>
            <person name="Oshima A."/>
            <person name="Sasaki N."/>
            <person name="Aotsuka S."/>
            <person name="Yoshikawa Y."/>
            <person name="Matsunawa H."/>
            <person name="Ichihara T."/>
            <person name="Shiohata N."/>
            <person name="Sano S."/>
            <person name="Moriya S."/>
            <person name="Momiyama H."/>
            <person name="Satoh N."/>
            <person name="Takami S."/>
            <person name="Terashima Y."/>
            <person name="Suzuki O."/>
            <person name="Nakagawa S."/>
            <person name="Senoh A."/>
            <person name="Mizoguchi H."/>
            <person name="Goto Y."/>
            <person name="Shimizu F."/>
            <person name="Wakebe H."/>
            <person name="Hishigaki H."/>
            <person name="Watanabe T."/>
            <person name="Sugiyama A."/>
            <person name="Takemoto M."/>
            <person name="Kawakami B."/>
            <person name="Yamazaki M."/>
            <person name="Watanabe K."/>
            <person name="Kumagai A."/>
            <person name="Itakura S."/>
            <person name="Fukuzumi Y."/>
            <person name="Fujimori Y."/>
            <person name="Komiyama M."/>
            <person name="Tashiro H."/>
            <person name="Tanigami A."/>
            <person name="Fujiwara T."/>
            <person name="Ono T."/>
            <person name="Yamada K."/>
            <person name="Fujii Y."/>
            <person name="Ozaki K."/>
            <person name="Hirao M."/>
            <person name="Ohmori Y."/>
            <person name="Kawabata A."/>
            <person name="Hikiji T."/>
            <person name="Kobatake N."/>
            <person name="Inagaki H."/>
            <person name="Ikema Y."/>
            <person name="Okamoto S."/>
            <person name="Okitani R."/>
            <person name="Kawakami T."/>
            <person name="Noguchi S."/>
            <person name="Itoh T."/>
            <person name="Shigeta K."/>
            <person name="Senba T."/>
            <person name="Matsumura K."/>
            <person name="Nakajima Y."/>
            <person name="Mizuno T."/>
            <person name="Morinaga M."/>
            <person name="Sasaki M."/>
            <person name="Togashi T."/>
            <person name="Oyama M."/>
            <person name="Hata H."/>
            <person name="Watanabe M."/>
            <person name="Komatsu T."/>
            <person name="Mizushima-Sugano J."/>
            <person name="Satoh T."/>
            <person name="Shirai Y."/>
            <person name="Takahashi Y."/>
            <person name="Nakagawa K."/>
            <person name="Okumura K."/>
            <person name="Nagase T."/>
            <person name="Nomura N."/>
            <person name="Kikuchi H."/>
            <person name="Masuho Y."/>
            <person name="Yamashita R."/>
            <person name="Nakai K."/>
            <person name="Yada T."/>
            <person name="Nakamura Y."/>
            <person name="Ohara O."/>
            <person name="Isogai T."/>
            <person name="Sugano S."/>
        </authorList>
    </citation>
    <scope>NUCLEOTIDE SEQUENCE [LARGE SCALE MRNA] (ISOFORM 3)</scope>
    <scope>VARIANT GLY-264</scope>
</reference>
<reference key="4">
    <citation type="journal article" date="2004" name="Nature">
        <title>The sequence and analysis of duplication-rich human chromosome 16.</title>
        <authorList>
            <person name="Martin J."/>
            <person name="Han C."/>
            <person name="Gordon L.A."/>
            <person name="Terry A."/>
            <person name="Prabhakar S."/>
            <person name="She X."/>
            <person name="Xie G."/>
            <person name="Hellsten U."/>
            <person name="Chan Y.M."/>
            <person name="Altherr M."/>
            <person name="Couronne O."/>
            <person name="Aerts A."/>
            <person name="Bajorek E."/>
            <person name="Black S."/>
            <person name="Blumer H."/>
            <person name="Branscomb E."/>
            <person name="Brown N.C."/>
            <person name="Bruno W.J."/>
            <person name="Buckingham J.M."/>
            <person name="Callen D.F."/>
            <person name="Campbell C.S."/>
            <person name="Campbell M.L."/>
            <person name="Campbell E.W."/>
            <person name="Caoile C."/>
            <person name="Challacombe J.F."/>
            <person name="Chasteen L.A."/>
            <person name="Chertkov O."/>
            <person name="Chi H.C."/>
            <person name="Christensen M."/>
            <person name="Clark L.M."/>
            <person name="Cohn J.D."/>
            <person name="Denys M."/>
            <person name="Detter J.C."/>
            <person name="Dickson M."/>
            <person name="Dimitrijevic-Bussod M."/>
            <person name="Escobar J."/>
            <person name="Fawcett J.J."/>
            <person name="Flowers D."/>
            <person name="Fotopulos D."/>
            <person name="Glavina T."/>
            <person name="Gomez M."/>
            <person name="Gonzales E."/>
            <person name="Goodstein D."/>
            <person name="Goodwin L.A."/>
            <person name="Grady D.L."/>
            <person name="Grigoriev I."/>
            <person name="Groza M."/>
            <person name="Hammon N."/>
            <person name="Hawkins T."/>
            <person name="Haydu L."/>
            <person name="Hildebrand C.E."/>
            <person name="Huang W."/>
            <person name="Israni S."/>
            <person name="Jett J."/>
            <person name="Jewett P.B."/>
            <person name="Kadner K."/>
            <person name="Kimball H."/>
            <person name="Kobayashi A."/>
            <person name="Krawczyk M.-C."/>
            <person name="Leyba T."/>
            <person name="Longmire J.L."/>
            <person name="Lopez F."/>
            <person name="Lou Y."/>
            <person name="Lowry S."/>
            <person name="Ludeman T."/>
            <person name="Manohar C.F."/>
            <person name="Mark G.A."/>
            <person name="McMurray K.L."/>
            <person name="Meincke L.J."/>
            <person name="Morgan J."/>
            <person name="Moyzis R.K."/>
            <person name="Mundt M.O."/>
            <person name="Munk A.C."/>
            <person name="Nandkeshwar R.D."/>
            <person name="Pitluck S."/>
            <person name="Pollard M."/>
            <person name="Predki P."/>
            <person name="Parson-Quintana B."/>
            <person name="Ramirez L."/>
            <person name="Rash S."/>
            <person name="Retterer J."/>
            <person name="Ricke D.O."/>
            <person name="Robinson D.L."/>
            <person name="Rodriguez A."/>
            <person name="Salamov A."/>
            <person name="Saunders E.H."/>
            <person name="Scott D."/>
            <person name="Shough T."/>
            <person name="Stallings R.L."/>
            <person name="Stalvey M."/>
            <person name="Sutherland R.D."/>
            <person name="Tapia R."/>
            <person name="Tesmer J.G."/>
            <person name="Thayer N."/>
            <person name="Thompson L.S."/>
            <person name="Tice H."/>
            <person name="Torney D.C."/>
            <person name="Tran-Gyamfi M."/>
            <person name="Tsai M."/>
            <person name="Ulanovsky L.E."/>
            <person name="Ustaszewska A."/>
            <person name="Vo N."/>
            <person name="White P.S."/>
            <person name="Williams A.L."/>
            <person name="Wills P.L."/>
            <person name="Wu J.-R."/>
            <person name="Wu K."/>
            <person name="Yang J."/>
            <person name="DeJong P."/>
            <person name="Bruce D."/>
            <person name="Doggett N.A."/>
            <person name="Deaven L."/>
            <person name="Schmutz J."/>
            <person name="Grimwood J."/>
            <person name="Richardson P."/>
            <person name="Rokhsar D.S."/>
            <person name="Eichler E.E."/>
            <person name="Gilna P."/>
            <person name="Lucas S.M."/>
            <person name="Myers R.M."/>
            <person name="Rubin E.M."/>
            <person name="Pennacchio L.A."/>
        </authorList>
    </citation>
    <scope>NUCLEOTIDE SEQUENCE [LARGE SCALE GENOMIC DNA]</scope>
</reference>
<reference key="5">
    <citation type="journal article" date="2011" name="Am. J. Physiol.">
        <title>Similar Effects of all WNK3 Variants upon SLC12 Cotransporters.</title>
        <authorList>
            <person name="Cruz-Rangel S."/>
            <person name="Melo Z."/>
            <person name="Vazquez N."/>
            <person name="Meade P."/>
            <person name="Bobadilla N.A."/>
            <person name="Pasantes-Morales H."/>
            <person name="Gamba G."/>
            <person name="Mercado A."/>
        </authorList>
    </citation>
    <scope>FUNCTION</scope>
    <scope>ACTIVITY REGULATION</scope>
</reference>
<reference key="6">
    <citation type="journal article" date="2008" name="J. Cell Sci.">
        <title>Activation of the thiazide-sensitive Na+-Cl- cotransporter by the WNK-regulated kinases SPAK and OSR1.</title>
        <authorList>
            <person name="Richardson C."/>
            <person name="Rafiqi F.H."/>
            <person name="Karlsson H.K."/>
            <person name="Moleleki N."/>
            <person name="Vandewalle A."/>
            <person name="Campbell D.G."/>
            <person name="Morrice N.A."/>
            <person name="Alessi D.R."/>
        </authorList>
    </citation>
    <scope>FUNCTION</scope>
    <scope>ACTIVITY REGULATION</scope>
    <scope>PHOSPHORYLATION AT THR-46; THR-55; THR-60 AND SER-91</scope>
    <scope>MUTAGENESIS OF ARG-19; THR-46; THR-55; THR-60 AND SER-91</scope>
</reference>
<reference key="7">
    <citation type="journal article" date="2013" name="J. Proteome Res.">
        <title>Toward a comprehensive characterization of a human cancer cell phosphoproteome.</title>
        <authorList>
            <person name="Zhou H."/>
            <person name="Di Palma S."/>
            <person name="Preisinger C."/>
            <person name="Peng M."/>
            <person name="Polat A.N."/>
            <person name="Heck A.J."/>
            <person name="Mohammed S."/>
        </authorList>
    </citation>
    <scope>PHOSPHORYLATION [LARGE SCALE ANALYSIS] AT SER-91</scope>
    <scope>IDENTIFICATION BY MASS SPECTROMETRY [LARGE SCALE ANALYSIS]</scope>
    <source>
        <tissue>Cervix carcinoma</tissue>
    </source>
</reference>
<reference key="8">
    <citation type="journal article" date="2015" name="Nat. Med.">
        <title>Interleukin 18 function in atherosclerosis is mediated by the interleukin 18 receptor and the Na-Cl co-transporter.</title>
        <authorList>
            <person name="Wang J."/>
            <person name="Sun C."/>
            <person name="Gerdes N."/>
            <person name="Liu C."/>
            <person name="Liao M."/>
            <person name="Liu J."/>
            <person name="Shi M.A."/>
            <person name="He A."/>
            <person name="Zhou Y."/>
            <person name="Sukhova G.K."/>
            <person name="Chen H."/>
            <person name="Cheng X.W."/>
            <person name="Kuzuya M."/>
            <person name="Murohara T."/>
            <person name="Zhang J."/>
            <person name="Cheng X."/>
            <person name="Jiang M."/>
            <person name="Shull G.E."/>
            <person name="Rogers S."/>
            <person name="Yang C.L."/>
            <person name="Ke Q."/>
            <person name="Jelen S."/>
            <person name="Bindels R."/>
            <person name="Ellison D.H."/>
            <person name="Jarolim P."/>
            <person name="Libby P."/>
            <person name="Shi G.P."/>
        </authorList>
    </citation>
    <scope>TISSUE SPECIFICITY</scope>
    <scope>CHARACTERIZATION OF VARIANTS GTLMNS ASP-121; SER-439; CYS-475 AND ARG-1021</scope>
</reference>
<reference key="9">
    <citation type="journal article" date="2018" name="Am. J. Physiol.">
        <title>H+-ATPase B1 subunit localizes to thick ascending limb and distal convoluted tubule of rodent and human kidney.</title>
        <authorList>
            <person name="Frische S."/>
            <person name="Chambrey R."/>
            <person name="Trepiccione F."/>
            <person name="Zamani R."/>
            <person name="Marcussen N."/>
            <person name="Alexander R.T."/>
            <person name="Skjoedt K."/>
            <person name="Svenningsen P."/>
            <person name="Dimke H."/>
        </authorList>
    </citation>
    <scope>TISSUE SPECIFICITY</scope>
</reference>
<reference key="10">
    <citation type="journal article" date="2012" name="Nat. Genet.">
        <title>KLHL3 mutations cause familial hyperkalemic hypertension by impairing ion transport in the distal nephron.</title>
        <authorList>
            <person name="Louis-Dit-Picard H."/>
            <person name="Barc J."/>
            <person name="Trujillano D."/>
            <person name="Miserey-Lenkei S."/>
            <person name="Bouatia-Naji N."/>
            <person name="Pylypenko O."/>
            <person name="Beaurain G."/>
            <person name="Bonnefond A."/>
            <person name="Sand O."/>
            <person name="Simian C."/>
            <person name="Vidal-Petiot E."/>
            <person name="Soukaseum C."/>
            <person name="Mandet C."/>
            <person name="Broux F."/>
            <person name="Chabre O."/>
            <person name="Delahousse M."/>
            <person name="Esnault V."/>
            <person name="Fiquet B."/>
            <person name="Houillier P."/>
            <person name="Bagnis C.I."/>
            <person name="Koenig J."/>
            <person name="Konrad M."/>
            <person name="Landais P."/>
            <person name="Mourani C."/>
            <person name="Niaudet P."/>
            <person name="Probst V."/>
            <person name="Thauvin C."/>
            <person name="Unwin R.J."/>
            <person name="Soroka S.D."/>
            <person name="Ehret G."/>
            <person name="Ossowski S."/>
            <person name="Caulfield M."/>
            <person name="Bruneval P."/>
            <person name="Estivill X."/>
            <person name="Froguel P."/>
            <person name="Hadchouel J."/>
            <person name="Schott J.J."/>
            <person name="Jeunemaitre X."/>
        </authorList>
    </citation>
    <scope>INTERACTION WITH KLHL3</scope>
    <scope>UBIQUITINATION</scope>
</reference>
<reference evidence="44 45 46" key="11">
    <citation type="journal article" date="2022" name="Sci. Adv.">
        <title>Cryo-EM structure of the human sodium-chloride cotransporter NCC.</title>
        <authorList>
            <person name="Nan J."/>
            <person name="Yuan Y."/>
            <person name="Yang X."/>
            <person name="Shan Z."/>
            <person name="Liu H."/>
            <person name="Wei F."/>
            <person name="Zhang W."/>
            <person name="Zhang Y."/>
        </authorList>
    </citation>
    <scope>STRUCTURE BY ELECTRON MICROSCOPY (2.85 ANGSTROMS) IN COMPLEX WITH CHLORIDE AND SODIUM</scope>
    <scope>FUNCTION</scope>
    <scope>TRANSPORTER ACTIVITY</scope>
    <scope>SUBUNIT</scope>
    <scope>GLYCOSYLATION AT ASN-406 AND ASN-426</scope>
    <scope>MUTAGENESIS OF ASN-149; PHE-223; ASN-227; HIS-234; TYR-386; SER-467; SER-468 AND TYR-540</scope>
</reference>
<reference evidence="47 48 49 50 51 52" key="12">
    <citation type="journal article" date="2023" name="Nature">
        <title>Structure and thiazide inhibition mechanism of the human Na-Cl cotransporter.</title>
        <authorList>
            <person name="Fan M."/>
            <person name="Zhang J."/>
            <person name="Lee C.L."/>
            <person name="Zhang J."/>
            <person name="Feng L."/>
        </authorList>
    </citation>
    <scope>STRUCTURE BY ELECTRON MICROSCOPY (2.81 ANGSTROMS) OF 132-1021 IN COMPLEX WITH CHLORIDE; SODIUM; POLYTHIAZIDE AND ATP</scope>
    <scope>FUNCTION</scope>
    <scope>TRANSPORTER ACTIVITY</scope>
    <scope>ACTIVITY REGULATION</scope>
    <scope>DISULFIDE BONDS</scope>
    <scope>DOMAIN</scope>
    <scope>MUTAGENESIS OF ASP-62; TYR-70; ARG-83; LEU-86; ASN-149; ARG-158; PHE-223; GLU-240; SER-467; SER-468; ASN-526; TYR-540; PHE-765; ASP-838; PHE-886 AND ARG-1009</scope>
</reference>
<reference key="13">
    <citation type="journal article" date="1996" name="Am. J. Hum. Genet.">
        <title>Novel molecular variants of the Na-Cl cotransporter gene are responsible for Gitelman syndrome.</title>
        <authorList>
            <person name="Mastroianni N."/>
            <person name="Bettinelli A."/>
            <person name="Bianchetti M."/>
            <person name="Colussi G."/>
            <person name="De Fusco M."/>
            <person name="Sereni F."/>
            <person name="Ballabio A."/>
            <person name="Casari G."/>
        </authorList>
    </citation>
    <scope>VARIANTS GTLMNS ASN-62; ASP-186; TRP-209; LEU-349; SER-439; GLU-478; ASN-486; CYS-496; PRO-542; VAL-588 AND ARG-731</scope>
</reference>
<reference key="14">
    <citation type="journal article" date="1996" name="J. Clin. Endocrinol. Metab.">
        <title>Association of a mutation in thiazide-sensitive Na-Cl cotransporter with familial Gitelman's syndrome.</title>
        <authorList>
            <person name="Takeuchi K."/>
            <person name="Kure S."/>
            <person name="Kato T."/>
            <person name="Taniyama Y."/>
            <person name="Takahashi N."/>
            <person name="Ikeda Y."/>
            <person name="Abe T."/>
            <person name="Narisawa K."/>
            <person name="Muramatsu Y."/>
            <person name="Abe K."/>
        </authorList>
    </citation>
    <scope>VARIANT GTLMNS PRO-623</scope>
</reference>
<reference key="15">
    <citation type="journal article" date="1998" name="Kidney Int.">
        <title>Novel mutations in the thiazide-sensitive NaCl cotransporter gene in patients with Gitelman syndrome with predominant localization to the C-terminal domain.</title>
        <authorList>
            <person name="Lemmink H.H."/>
            <person name="Knoers N.V.A.M."/>
            <person name="Karolyi L."/>
            <person name="van Dijk H."/>
            <person name="Niaudet P."/>
            <person name="Antignac C."/>
            <person name="Guay-Woodford L.M."/>
            <person name="Goodyer P.R."/>
            <person name="Carel J.-C."/>
            <person name="Hermes A."/>
            <person name="Seyberth H.W."/>
            <person name="Monnens L.A.H."/>
            <person name="van den Heuvel L.P.W.J."/>
        </authorList>
    </citation>
    <scope>VARIANTS GTLMNS TRP-209; PRO-215; THR-226; HIS-261; HIS-560; SER-613; HIS-642; ARG-649; CYS-655; ARG-738; ARG-741; PRO-850 AND CYS-852</scope>
    <scope>VARIANTS GLN-904 AND CYS-919</scope>
</reference>
<reference key="16">
    <citation type="journal article" date="2000" name="Hypertension">
        <title>Genetic variants of thiazide-sensitive NaCl-cotransporter in Gitelman's syndrome and primary hypertension.</title>
        <authorList>
            <person name="Melander O."/>
            <person name="Orho-Melander M."/>
            <person name="Bengtsson K."/>
            <person name="Lindblad U."/>
            <person name="Rastam L."/>
            <person name="Groop L."/>
            <person name="Hulthen U.L."/>
        </authorList>
    </citation>
    <scope>VARIANTS GTLMNS PRO-304; SER-439; ARG-731 AND ARG-741</scope>
    <scope>VARIANT GLN-904</scope>
</reference>
<reference key="17">
    <citation type="journal article" date="2000" name="J. Am. Soc. Nephrol.">
        <title>Novel mutations in thiazide-sensitive Na-Cl cotransporter gene of patients with Gitelman's syndrome.</title>
        <authorList>
            <person name="Monkawa T."/>
            <person name="Kurihara I."/>
            <person name="Kobayashi K."/>
            <person name="Hayashi M."/>
            <person name="Saruta T."/>
        </authorList>
    </citation>
    <scope>VARIANTS GTLMNS LYS-180; GLU-569; MET-578; CYS-642 AND HIS-849</scope>
</reference>
<reference key="18">
    <citation type="journal article" date="2001" name="Kidney Int.">
        <title>Gitelman's syndrome revisited: an evaluation of symptoms and health-related quality of life.</title>
        <authorList>
            <person name="Cruz D.N."/>
            <person name="Shaer A.J."/>
            <person name="Bia M.J."/>
            <person name="Lifton R.P."/>
            <person name="Simon D.B."/>
        </authorList>
    </citation>
    <scope>VARIANTS GTLMNS PHE-154; LEU-178; GLN-209; ARG-284; VAL-313; TRP-321; TRP-334; CYS-399; LEU-555; LEU-615; GLY-642; LEU-643 AND VAL-729</scope>
</reference>
<reference key="19">
    <citation type="journal article" date="2002" name="Clin. Endocrinol. (Oxf.)">
        <title>Severe hypomagnesaemia-induced hypocalcaemia in a patient with Gitelman's syndrome.</title>
        <authorList>
            <person name="Pantanetti P."/>
            <person name="Arnaldi G."/>
            <person name="Balercia G."/>
            <person name="Mantero F."/>
            <person name="Giacchetti G."/>
        </authorList>
    </citation>
    <scope>VARIANT GTLMNS LEU-643</scope>
    <scope>VARIANT GLY-264</scope>
</reference>
<reference key="20">
    <citation type="journal article" date="2002" name="Endocr. J.">
        <title>Two novel mutations of thiazide-sensitive Na-Cl cotrans porter (TSC) gene in two sporadic Japanese patients with Gitelman syndrome.</title>
        <authorList>
            <person name="Tajima T."/>
            <person name="Kobayashi Y."/>
            <person name="Abe S."/>
            <person name="Takahashi M."/>
            <person name="Konno M."/>
            <person name="Nakae J."/>
            <person name="Okuhara K."/>
            <person name="Satoh K."/>
            <person name="Ishikawa T."/>
            <person name="Imai T."/>
            <person name="Fujieda K."/>
        </authorList>
    </citation>
    <scope>VARIANT GTLMNS PRO-623</scope>
</reference>
<reference key="21">
    <citation type="journal article" date="2002" name="Hum. Mutat.">
        <title>Identification of fifteen novel mutations in the SLC12A3 gene encoding the Na-Cl Co-transporter in Italian patients with Gitelman syndrome.</title>
        <authorList>
            <person name="Syren M.-L."/>
            <person name="Tedeschi S."/>
            <person name="Cesareo L."/>
            <person name="Bellantuono R."/>
            <person name="Colussi G."/>
            <person name="Procaccio M."/>
            <person name="Ali A."/>
            <person name="Domenici R."/>
            <person name="Malberti F."/>
            <person name="Sprocati M."/>
            <person name="Sacco M."/>
            <person name="Miglietti N."/>
            <person name="Edefonti A."/>
            <person name="Sereni F."/>
            <person name="Casari G."/>
            <person name="Coviello D.A."/>
            <person name="Bettinelli A."/>
        </authorList>
    </citation>
    <scope>VARIANTS GTLMNS GLN-158; MET-163; ARG-172; TRP-209; VAL-316; VAL-374; GLU-463; THR-464; LEU-615; TRP-615; GLY-642; HIS-642; MET-677; CYS-852; SER-852; GLY-958 AND TYR-985</scope>
    <scope>VARIANT GLN-904</scope>
</reference>
<reference key="22">
    <citation type="journal article" date="2004" name="Nephrol. Dial. Transplant.">
        <title>Four novel mutations in the thiazide-sensitive Na-Cl co-transporter gene in Japanese patients with Gitelman's syndrome.</title>
        <authorList>
            <person name="Maki N."/>
            <person name="Komatsuda A."/>
            <person name="Wakui H."/>
            <person name="Ohtani H."/>
            <person name="Kigawa A."/>
            <person name="Aiba N."/>
            <person name="Hamai K."/>
            <person name="Motegi M."/>
            <person name="Yamaguchi A."/>
            <person name="Imai H."/>
            <person name="Sawada K."/>
        </authorList>
    </citation>
    <scope>VARIANTS GTLMNS MET-60; VAL-569; CYS-642 AND HIS-849</scope>
</reference>
<reference key="23">
    <citation type="journal article" date="2005" name="J. Clin. Endocrinol. Metab.">
        <title>Phenotype and genotype analysis in Chinese patients with Gitelman's syndrome.</title>
        <authorList>
            <person name="Lin S.-H."/>
            <person name="Shiang J.-C."/>
            <person name="Huang C.-C."/>
            <person name="Yang S.-S."/>
            <person name="Hsu Y.-J."/>
            <person name="Cheng C.-J."/>
        </authorList>
    </citation>
    <scope>VARIANTS GTLMNS TYR-90; TYR-283 AND HIS-871</scope>
</reference>
<reference key="24">
    <citation type="journal article" date="2006" name="Clin. Nephrol.">
        <title>A novel mutation of the thiazide-sensitive sodium chloride cotransporter gene in a Japanese family with Gitelman syndrome.</title>
        <authorList>
            <person name="Terui K."/>
            <person name="Shoji M."/>
            <person name="Yamashiki J."/>
            <person name="Hirai Y."/>
            <person name="Ishiguro A."/>
            <person name="Tsutaya S."/>
            <person name="Kageyama K."/>
            <person name="Yasujima M."/>
            <person name="Suda T."/>
        </authorList>
    </citation>
    <scope>VARIANT GTLMNS ILE-672</scope>
</reference>
<reference key="25">
    <citation type="journal article" date="2007" name="DNA Seq.">
        <title>Novel mutations in the SLC12A3 gene causing Gitelman's syndrome in Swedes.</title>
        <authorList>
            <person name="Fava C."/>
            <person name="Montagnana M."/>
            <person name="Rosberg L."/>
            <person name="Burri P."/>
            <person name="Joensson A."/>
            <person name="Wanby P."/>
            <person name="Wahrenberg H."/>
            <person name="Hulthen U.L."/>
            <person name="Aurell M."/>
            <person name="Guidi G.C."/>
            <person name="Melander O."/>
        </authorList>
    </citation>
    <scope>VARIANTS GTLMNS LYS-68; ASN-69; HIS-145; MET-153; ASP-230; ALA-342; LEU-677 AND SER-867</scope>
</reference>
<reference key="26">
    <citation type="journal article" date="2007" name="Endocrine">
        <title>Two novel genotypes of the thiazide-sensitive Na-Cl cotransporter (SLC12A3) gene in patients with Gitelman's syndrome.</title>
        <authorList>
            <person name="Aoi N."/>
            <person name="Nakayama T."/>
            <person name="Tahira Y."/>
            <person name="Haketa A."/>
            <person name="Yabuki M."/>
            <person name="Sekiyama T."/>
            <person name="Nakane C."/>
            <person name="Mano H."/>
            <person name="Kawachi H."/>
            <person name="Sato N."/>
            <person name="Soma M."/>
            <person name="Matsumoto K."/>
        </authorList>
    </citation>
    <scope>VARIANTS GTLMNS HIS-849 AND HIS-852</scope>
</reference>
<reference key="27">
    <citation type="journal article" date="2007" name="J. Hypertens.">
        <title>Molecular variants of the thiazide-sensitive Na+-Cl- cotransporter in hypertensive families.</title>
        <authorList>
            <person name="Keszei A.P."/>
            <person name="Tisler A."/>
            <person name="Backx P.H."/>
            <person name="Andrulis I.L."/>
            <person name="Bull S.B."/>
            <person name="Logan A.G."/>
        </authorList>
    </citation>
    <scope>VARIANTS GLY-264; THR-728; GLN-904 AND CYS-919</scope>
    <scope>CHARACTERIZATION OF VARIANT CYS-919</scope>
</reference>
<reference key="28">
    <citation type="journal article" date="2012" name="Eur. J. Hum. Genet.">
        <title>Novel NCC mutants and functional analysis in a new cohort of patients with Gitelman syndrome.</title>
        <authorList>
            <person name="Glaudemans B."/>
            <person name="Yntema H.G."/>
            <person name="San-Cristobal P."/>
            <person name="Schoots J."/>
            <person name="Pfundt R."/>
            <person name="Kamsteeg E.J."/>
            <person name="Bindels R.J."/>
            <person name="Knoers N.V."/>
            <person name="Hoenderop J.G."/>
            <person name="Hoefsloot L.H."/>
        </authorList>
    </citation>
    <scope>VARIANTS GTLMNS MET-60; HIS-62; GLN-83; TRP-83; ASP-121; CYS-135; CYS-145; MET-150; MET-153; PRO-157; LEU-158; MET-163; VAL-166; ARG-172; LEU-178; THR-192; ILE-194; GLN-209; ARG-235; ASN-259; PRO-272; MET-304; PRO-304; VAL-313; TRP-321; TRP-334; GLU-374; MET-382; ILE-392; CYS-399; 433-GLN--CYS-436 DELINS LEU; SER-439; SER-442; ARG-463; THR-464; CYS-475; HIS-489; CYS-507; THR-523; SER-534; LEU-536; GLY-546; LEU-555; ARG-560; ASN-566 DEL; LEU-615; CYS-642; CYS-642; GLY-642; HIS-642; LEU-643; MET-647; HIS-655; LYS-ALA-PHE-TYR-SER-ASP-VAL-ILE-713 INS; VAL-729; ARG-735; ARG-741; LEU-751; THR-824; ASN-839; PHE-849; PRO-850; CYS-852; CYS-862; THR-872; GLN-887; TRP-934; TRP-935; GLN-955; GLY-958; ARG-980; TYR-985; GLN-1009 AND ARG-1021</scope>
    <scope>CHARACTERIZATION OF VARIANT GTLMNS ASP-121; ILE-392; SER-442; CYS-475; HIS-489; LEU-751 AND ARG-1021</scope>
    <scope>FUNCTION</scope>
    <scope>SUBCELLULAR LOCATION</scope>
</reference>
<reference key="29">
    <citation type="journal article" date="2021" name="QJM">
        <title>Novel heterozygous mutation of SLC12A3 gene in Gitelman syndrome.</title>
        <authorList>
            <person name="Wang T."/>
            <person name="Chen Y."/>
            <person name="Yin X."/>
            <person name="Qiu H."/>
        </authorList>
    </citation>
    <scope>INVOLVEMENT IN GTLMNS</scope>
</reference>
<reference key="30">
    <citation type="journal article" date="2021" name="BMJ Case Rep.">
        <title>Novel SLC12A3 mutation in Gitelman syndrome.</title>
        <authorList>
            <person name="Verissimo R."/>
            <person name="Leite de Sousa L."/>
            <person name="Carvalho T.J."/>
            <person name="Fidalgo P."/>
        </authorList>
    </citation>
    <scope>VARIANT GTLMNS CYS-852</scope>
</reference>
<reference key="31">
    <citation type="journal article" date="2021" name="Int. J. Gen. Med.">
        <title>Three Novel Homozygous Mutations of the SLC12A3 Gene in a Gitelman Syndrome Patient.</title>
        <authorList>
            <person name="Zhong M."/>
            <person name="Zhai Z."/>
            <person name="Zhou X."/>
            <person name="Sun J."/>
            <person name="Chen H."/>
            <person name="Lu W."/>
        </authorList>
    </citation>
    <scope>VARIANTS GTLMNS MET-60 AND ASN-486</scope>
    <scope>VARIANT GLY-264</scope>
</reference>
<reference key="32">
    <citation type="journal article" date="2021" name="Scand. J. Clin. Lab. Invest.">
        <title>Novel mutations of the SLC12A3 gene in patients with Gitelman syndrome.</title>
        <authorList>
            <person name="Wang F."/>
            <person name="Guo M."/>
            <person name="Li J."/>
            <person name="Ma S."/>
        </authorList>
    </citation>
    <scope>VARIANTS GTLMNS LYS-359; ASN-486; PHE-537; ASN-839 AND ARG-1010</scope>
</reference>
<reference key="33">
    <citation type="journal article" date="2022" name="Front. Med.">
        <title>R158Q and G212S, novel pathogenic compound heterozygous variants in SLC12A3 of Gitelman syndrome.</title>
        <authorList>
            <person name="Li Z."/>
            <person name="Wu H."/>
            <person name="Wei S."/>
            <person name="Liu M."/>
            <person name="Shi Y."/>
            <person name="Li M."/>
            <person name="Wang N."/>
            <person name="Fang L."/>
            <person name="Xiang B."/>
            <person name="Gao L."/>
            <person name="Xu C."/>
            <person name="Zhao J."/>
        </authorList>
    </citation>
    <scope>VARIANTS GTLMNS GLN-158 AND SER-212</scope>
    <scope>CHARACTERIZATION OF VARIANTS GTLMNS GLN-158 AND SER-212</scope>
    <scope>SUBCELLULAR LOCATION</scope>
</reference>
<reference key="34">
    <citation type="journal article" date="2022" name="Nefrologia">
        <title>Gitelman syndrome - A new mutation in the SLC12A3 gene.</title>
        <authorList>
            <person name="Correia A.L."/>
            <person name="Marques M.G."/>
            <person name="Alves R."/>
        </authorList>
    </citation>
    <scope>INVOLVEMENT IN GTLMNS</scope>
</reference>
<reference key="35">
    <citation type="journal article" date="2022" name="SAGE Open Med. Case Rep.">
        <title>A novel mutation of SLC12A3 gene causing Gitelman syndrome.</title>
        <authorList>
            <person name="De Silva N."/>
            <person name="Pathmanathan S."/>
            <person name="Sumanatilleke M."/>
            <person name="Dematapitiya C."/>
            <person name="Dissanayake P."/>
            <person name="Wijenayake U."/>
            <person name="Subasinghe V."/>
            <person name="Dissanayake V."/>
        </authorList>
    </citation>
    <scope>VARIANT GTLMNS LYS-304</scope>
</reference>
<sequence>MAELPTTETPGDATLCSGRFTISTLLSSDEPSPPAAYDSSHPSHLTHSSTFCMRTFGYNTIDVVPTYEHYANSTQPGEPRKVRPTLADLHSFLKQEGRHLHALAFDSRPSHEMTDGLVEGEAGTSSEKNPEEPVRFGWVKGVMIRCMLNIWGVILYLRLPWITAQAGIVLTWIIILLSVTVTSITGLSISAISTNGKVKSGGTYFLISRSLGPELGGSIGLIFAFANAVGVAMHTVGFAETVRDLLQEYGAPIVDPINDIRIIAVVSVTVLLAISLAGMEWESKAQVLFFLVIMVSFANYLVGTLIPPSEDKASKGFFSYRADIFVQNLVPDWRGPDGTFFGMFSIFFPSATGILAGANISGDLKDPAIAIPKGTLMAIFWTTISYLAISATIGSCVVRDASGVLNDTVTPGWGACEGLACSYGWNFTECTQQHSCHYGLINYYQTMSMVSGFAPLITAGIFGATLSSALACLVSAAKVFQCLCEDQLYPLIGFFGKGYGKNKEPVRGYLLAYAIAVAFIIIAELNTIAPIISNFFLCSYALINFSCFHASITNSPGWRPSFQYYNKWAALFGAIISVVIMFLLTWWAALIAIGVVLFLLLYVIYKKPEVNWGSSVQAGSYNLALSYSVGLNEVEDHIKNYRPQCLVLTGPPNFRPALVDFVGTFTRNLSLMICGHVLIGPHKQRMPELQLIANGHTKWLNKRKIKAFYSDVIAEDLRRGVQILMQAAGLGRMKPNILVVGFKKNWQSAHPATVEDYIGILHDAFDFNYGVCVMRMREGLNVSKMMQAHINPVFDPAEDGKEASARVDPKALVKEEQATTIFQSEQGKKTIDIYWLFDDGGLTLLIPYLLGRKRRWSKCKIRVFVGGQINRMDQERKAIISLLSKFRLGFHEVHILPDINQNPRAEHTKRFEDMIAPFRLNDGFKDEATVNEMRRDCPWKISDEEITKNRVKSLRQVRLNEIVLDYSRDAALIVITLPIGRKGKCPSSLYMAWLETLSQDLRPPVILIRGNQENVLTFYCQ</sequence>
<feature type="chain" id="PRO_0000178026" description="Solute carrier family 12 member 3">
    <location>
        <begin position="1"/>
        <end position="1021"/>
    </location>
</feature>
<feature type="topological domain" description="Cytoplasmic" evidence="26 29 44 48 49 50 51 52">
    <location>
        <begin position="1"/>
        <end position="137"/>
    </location>
</feature>
<feature type="transmembrane region" description="Discontinuously helical; Name=1" evidence="26 29 44 48 49 50 51 52">
    <location>
        <begin position="138"/>
        <end position="167"/>
    </location>
</feature>
<feature type="transmembrane region" description="Helical; Name=2" evidence="26 29 44 48 49 50 51 52">
    <location>
        <begin position="168"/>
        <end position="189"/>
    </location>
</feature>
<feature type="topological domain" description="Cytoplasmic" evidence="26 29 44 48 49 50 51 52">
    <location>
        <begin position="190"/>
        <end position="220"/>
    </location>
</feature>
<feature type="transmembrane region" description="Helical; Name=3" evidence="26 29 44 48 49 50 51 52">
    <location>
        <begin position="221"/>
        <end position="243"/>
    </location>
</feature>
<feature type="topological domain" description="Extracellular" evidence="26 29 44 48 49 50 51 52">
    <location>
        <begin position="244"/>
        <end position="255"/>
    </location>
</feature>
<feature type="transmembrane region" description="Helical; Name=4" evidence="26 29 44 48 49 50 51 52">
    <location>
        <begin position="256"/>
        <end position="280"/>
    </location>
</feature>
<feature type="transmembrane region" description="Helical; Name=5" evidence="26 29 44 48 49 50 51 52">
    <location>
        <begin position="281"/>
        <end position="303"/>
    </location>
</feature>
<feature type="topological domain" description="Extracellular" evidence="26 29 39 44 48 49 50 51 52">
    <location>
        <begin position="304"/>
        <end position="338"/>
    </location>
</feature>
<feature type="transmembrane region" description="Discontinuously helical; Name=6" evidence="26 29 44 48 49 50 51 52">
    <location>
        <begin position="339"/>
        <end position="360"/>
    </location>
</feature>
<feature type="topological domain" description="Cytoplasmic" evidence="26 29 44 48 49 50 51 52">
    <location>
        <begin position="361"/>
        <end position="371"/>
    </location>
</feature>
<feature type="transmembrane region" description="Helical; Name=7" evidence="26 29 44 48 49 50 51 52">
    <location>
        <begin position="372"/>
        <end position="393"/>
    </location>
</feature>
<feature type="topological domain" description="Extracellular" evidence="26 29 44 48 49 50 51 52">
    <location>
        <begin position="394"/>
        <end position="453"/>
    </location>
</feature>
<feature type="transmembrane region" description="Helical; Name=8" evidence="26 29 44 48 49 50 51 52">
    <location>
        <begin position="454"/>
        <end position="477"/>
    </location>
</feature>
<feature type="topological domain" description="Cytoplasmic" evidence="26 29 44 48 49 50 51 52">
    <location>
        <begin position="478"/>
        <end position="507"/>
    </location>
</feature>
<feature type="transmembrane region" description="Helical; Name=9" evidence="26 29 44 48 49 50 51 52">
    <location>
        <begin position="508"/>
        <end position="522"/>
    </location>
</feature>
<feature type="topological domain" description="Extracellular" evidence="26 29 44 48 49 50 51 52">
    <location>
        <begin position="523"/>
        <end position="527"/>
    </location>
</feature>
<feature type="transmembrane region" description="Helical; Name=10" evidence="26 29 44 48 49 50 51 52">
    <location>
        <begin position="528"/>
        <end position="544"/>
    </location>
</feature>
<feature type="topological domain" description="Cytoplasmic" evidence="26 29 44 48 49 50 51 52">
    <location>
        <begin position="545"/>
        <end position="567"/>
    </location>
</feature>
<feature type="transmembrane region" description="Helical; Name=11" evidence="26 29 44 48 49 50 51 52">
    <location>
        <begin position="568"/>
        <end position="587"/>
    </location>
</feature>
<feature type="transmembrane region" description="Helical; Name=12" evidence="26 29 44 48 49 50 51 52">
    <location>
        <begin position="588"/>
        <end position="599"/>
    </location>
</feature>
<feature type="topological domain" description="Cytoplasmic" evidence="26 29 44 48 49 50 51 52">
    <location>
        <begin position="600"/>
        <end position="1021"/>
    </location>
</feature>
<feature type="region of interest" description="Scissor helix" evidence="29 48 49 50 51 52">
    <location>
        <begin position="615"/>
        <end position="630"/>
    </location>
</feature>
<feature type="binding site" evidence="26 29 44 48 49 50 51 52">
    <location>
        <position position="148"/>
    </location>
    <ligand>
        <name>Na(+)</name>
        <dbReference type="ChEBI" id="CHEBI:29101"/>
    </ligand>
</feature>
<feature type="binding site" evidence="29 48 49 50 51">
    <location>
        <position position="149"/>
    </location>
    <ligand>
        <name>polythiazide</name>
        <dbReference type="ChEBI" id="CHEBI:8327"/>
    </ligand>
</feature>
<feature type="binding site" evidence="26 29 44 48 49 50 51 52">
    <location>
        <position position="151"/>
    </location>
    <ligand>
        <name>Na(+)</name>
        <dbReference type="ChEBI" id="CHEBI:29101"/>
    </ligand>
</feature>
<feature type="binding site" evidence="29 48 49 50">
    <location>
        <position position="227"/>
    </location>
    <ligand>
        <name>polythiazide</name>
        <dbReference type="ChEBI" id="CHEBI:8327"/>
    </ligand>
</feature>
<feature type="binding site" evidence="29 47 48 49 50 51">
    <location>
        <position position="234"/>
    </location>
    <ligand>
        <name>polythiazide</name>
        <dbReference type="ChEBI" id="CHEBI:8327"/>
    </ligand>
</feature>
<feature type="binding site" evidence="29 47 49 51">
    <location>
        <position position="352"/>
    </location>
    <ligand>
        <name>polythiazide</name>
        <dbReference type="ChEBI" id="CHEBI:8327"/>
    </ligand>
</feature>
<feature type="binding site" evidence="41 42 52">
    <location>
        <position position="353"/>
    </location>
    <ligand>
        <name>chloride</name>
        <dbReference type="ChEBI" id="CHEBI:17996"/>
    </ligand>
</feature>
<feature type="binding site" evidence="41 42 52">
    <location>
        <position position="354"/>
    </location>
    <ligand>
        <name>chloride</name>
        <dbReference type="ChEBI" id="CHEBI:17996"/>
    </ligand>
</feature>
<feature type="binding site" evidence="41 42 52">
    <location>
        <position position="355"/>
    </location>
    <ligand>
        <name>chloride</name>
        <dbReference type="ChEBI" id="CHEBI:17996"/>
    </ligand>
</feature>
<feature type="binding site" evidence="29 47">
    <location>
        <position position="359"/>
    </location>
    <ligand>
        <name>polythiazide</name>
        <dbReference type="ChEBI" id="CHEBI:8327"/>
    </ligand>
</feature>
<feature type="binding site" evidence="26 29 44 48 49 50 51 52">
    <location>
        <position position="464"/>
    </location>
    <ligand>
        <name>Na(+)</name>
        <dbReference type="ChEBI" id="CHEBI:29101"/>
    </ligand>
</feature>
<feature type="binding site" evidence="26 29 44 48 49 50 51 52">
    <location>
        <position position="467"/>
    </location>
    <ligand>
        <name>Na(+)</name>
        <dbReference type="ChEBI" id="CHEBI:29101"/>
    </ligand>
</feature>
<feature type="binding site" evidence="26 29 44 48 49 50 51 52">
    <location>
        <position position="468"/>
    </location>
    <ligand>
        <name>Na(+)</name>
        <dbReference type="ChEBI" id="CHEBI:29101"/>
    </ligand>
</feature>
<feature type="binding site" evidence="41 42 52">
    <location>
        <position position="540"/>
    </location>
    <ligand>
        <name>chloride</name>
        <dbReference type="ChEBI" id="CHEBI:17996"/>
    </ligand>
</feature>
<feature type="binding site" evidence="29 47 48">
    <location>
        <position position="648"/>
    </location>
    <ligand>
        <name>ATP</name>
        <dbReference type="ChEBI" id="CHEBI:30616"/>
    </ligand>
</feature>
<feature type="binding site" evidence="29 47 48">
    <location>
        <position position="655"/>
    </location>
    <ligand>
        <name>ATP</name>
        <dbReference type="ChEBI" id="CHEBI:30616"/>
    </ligand>
</feature>
<feature type="binding site" evidence="29 47 48">
    <location>
        <position position="677"/>
    </location>
    <ligand>
        <name>ATP</name>
        <dbReference type="ChEBI" id="CHEBI:30616"/>
    </ligand>
</feature>
<feature type="binding site" evidence="29 47 48">
    <location>
        <position position="741"/>
    </location>
    <ligand>
        <name>ATP</name>
        <dbReference type="ChEBI" id="CHEBI:30616"/>
    </ligand>
</feature>
<feature type="binding site" evidence="29 47 48">
    <location>
        <position position="780"/>
    </location>
    <ligand>
        <name>ATP</name>
        <dbReference type="ChEBI" id="CHEBI:30616"/>
    </ligand>
</feature>
<feature type="binding site" evidence="29 47 48">
    <location>
        <position position="781"/>
    </location>
    <ligand>
        <name>ATP</name>
        <dbReference type="ChEBI" id="CHEBI:30616"/>
    </ligand>
</feature>
<feature type="modified residue" description="Phosphoserine" evidence="1">
    <location>
        <position position="43"/>
    </location>
</feature>
<feature type="modified residue" description="Phosphothreonine; by OXSR1 and STK39" evidence="15">
    <location>
        <position position="46"/>
    </location>
</feature>
<feature type="modified residue" description="Phosphoserine" evidence="1">
    <location>
        <position position="49"/>
    </location>
</feature>
<feature type="modified residue" description="Phosphothreonine" evidence="1">
    <location>
        <position position="50"/>
    </location>
</feature>
<feature type="modified residue" description="Phosphothreonine; by OXSR1 and STK39" evidence="15">
    <location>
        <position position="55"/>
    </location>
</feature>
<feature type="modified residue" description="Phosphothreonine; by OXSR1 and STK39" evidence="15">
    <location>
        <position position="60"/>
    </location>
</feature>
<feature type="modified residue" description="Phosphoserine" evidence="1">
    <location>
        <position position="73"/>
    </location>
</feature>
<feature type="modified residue" description="Phosphoserine; by OXSR1 and STK39" evidence="40 53">
    <location>
        <position position="91"/>
    </location>
</feature>
<feature type="modified residue" description="Phosphothreonine" evidence="1">
    <location>
        <position position="124"/>
    </location>
</feature>
<feature type="modified residue" description="Phosphoserine" evidence="1">
    <location>
        <position position="126"/>
    </location>
</feature>
<feature type="glycosylation site" description="N-linked (GlcNAc...) asparagine" evidence="26 44">
    <location>
        <position position="406"/>
    </location>
</feature>
<feature type="glycosylation site" description="N-linked (GlcNAc...) asparagine" evidence="26 44">
    <location>
        <position position="426"/>
    </location>
</feature>
<feature type="disulfide bond" evidence="26 29 44 47 48 49 50 51 52">
    <location>
        <begin position="416"/>
        <end position="421"/>
    </location>
</feature>
<feature type="disulfide bond" evidence="26 29 44 47 48 49 50 51 52">
    <location>
        <begin position="430"/>
        <end position="436"/>
    </location>
</feature>
<feature type="splice variant" id="VSP_040100" description="In isoform 3." evidence="35">
    <location>
        <position position="95"/>
    </location>
</feature>
<feature type="splice variant" id="VSP_036318" description="In isoform 2 and isoform 3." evidence="35 37">
    <original>V</original>
    <variation>GARPSVSGAL</variation>
    <location>
        <position position="807"/>
    </location>
</feature>
<feature type="sequence variant" id="VAR_039475" description="In GTLMNS; dbSNP:rs371443644." evidence="9 17 23">
    <original>T</original>
    <variation>M</variation>
    <location>
        <position position="60"/>
    </location>
</feature>
<feature type="sequence variant" id="VAR_075931" description="In GTLMNS; dbSNP:rs757490496." evidence="17">
    <original>D</original>
    <variation>H</variation>
    <location>
        <position position="62"/>
    </location>
</feature>
<feature type="sequence variant" id="VAR_039476" description="In GTLMNS; dbSNP:rs757490496." evidence="32">
    <original>D</original>
    <variation>N</variation>
    <location>
        <position position="62"/>
    </location>
</feature>
<feature type="sequence variant" id="VAR_039477" description="In GTLMNS; dbSNP:rs763210286." evidence="12">
    <original>E</original>
    <variation>K</variation>
    <location>
        <position position="68"/>
    </location>
</feature>
<feature type="sequence variant" id="VAR_039478" description="In GTLMNS; dbSNP:rs780502516." evidence="12">
    <original>H</original>
    <variation>N</variation>
    <location>
        <position position="69"/>
    </location>
</feature>
<feature type="sequence variant" id="VAR_075932" description="In GTLMNS; dbSNP:rs768527231." evidence="17">
    <original>R</original>
    <variation>Q</variation>
    <location>
        <position position="83"/>
    </location>
</feature>
<feature type="sequence variant" id="VAR_075933" description="In GTLMNS; dbSNP:rs201255508." evidence="17">
    <original>R</original>
    <variation>W</variation>
    <location>
        <position position="83"/>
    </location>
</feature>
<feature type="sequence variant" id="VAR_039479" description="In GTLMNS; dbSNP:rs1596883431." evidence="10">
    <original>H</original>
    <variation>Y</variation>
    <location>
        <position position="90"/>
    </location>
</feature>
<feature type="sequence variant" id="VAR_075934" description="In GTLMNS; 27% residual Na(+) uptake activity; increased MAPK1/3 (ERK1/2) phosphorylation in response to IL18; no effect on localization at the plasma membrane; dbSNP:rs146632606." evidence="17 19">
    <original>E</original>
    <variation>D</variation>
    <location>
        <position position="121"/>
    </location>
</feature>
<feature type="sequence variant" id="VAR_075935" description="In GTLMNS; dbSNP:rs749742102." evidence="17">
    <original>R</original>
    <variation>C</variation>
    <location>
        <position position="135"/>
    </location>
</feature>
<feature type="sequence variant" id="VAR_075936" description="In GTLMNS; dbSNP:rs148945966." evidence="17">
    <original>R</original>
    <variation>C</variation>
    <location>
        <position position="145"/>
    </location>
</feature>
<feature type="sequence variant" id="VAR_039480" description="In GTLMNS; dbSNP:rs374324018." evidence="12">
    <original>R</original>
    <variation>H</variation>
    <location>
        <position position="145"/>
    </location>
</feature>
<feature type="sequence variant" id="VAR_075937" description="In GTLMNS; dbSNP:rs143714318." evidence="17">
    <original>I</original>
    <variation>M</variation>
    <location>
        <position position="150"/>
    </location>
</feature>
<feature type="sequence variant" id="VAR_039481" description="In GTLMNS; dbSNP:rs779074538." evidence="12 17">
    <original>V</original>
    <variation>M</variation>
    <location>
        <position position="153"/>
    </location>
</feature>
<feature type="sequence variant" id="VAR_039482" description="In GTLMNS; dbSNP:rs748547209." evidence="4">
    <original>I</original>
    <variation>F</variation>
    <location>
        <position position="154"/>
    </location>
</feature>
<feature type="sequence variant" id="VAR_075938" description="In GTLMNS; dbSNP:rs775047246." evidence="17">
    <original>L</original>
    <variation>P</variation>
    <location>
        <position position="157"/>
    </location>
</feature>
<feature type="sequence variant" id="VAR_075939" description="In GTLMNS." evidence="17">
    <original>R</original>
    <variation>L</variation>
    <location>
        <position position="158"/>
    </location>
</feature>
<feature type="sequence variant" id="VAR_039483" description="In GTLMNS; impaired protein structure; dbSNP:rs1274973729." evidence="7 27">
    <original>R</original>
    <variation>Q</variation>
    <location>
        <position position="158"/>
    </location>
</feature>
<feature type="sequence variant" id="VAR_039484" description="In GTLMNS; dbSNP:rs267607050." evidence="7 17">
    <original>T</original>
    <variation>M</variation>
    <location>
        <position position="163"/>
    </location>
</feature>
<feature type="sequence variant" id="VAR_075940" description="In GTLMNS; dbSNP:rs779683214." evidence="17">
    <original>A</original>
    <variation>V</variation>
    <location>
        <position position="166"/>
    </location>
</feature>
<feature type="sequence variant" id="VAR_039485" description="In GTLMNS; dbSNP:rs757792232." evidence="7 17">
    <original>W</original>
    <variation>R</variation>
    <location>
        <position position="172"/>
    </location>
</feature>
<feature type="sequence variant" id="VAR_039486" description="In GTLMNS; dbSNP:rs772589653." evidence="4 17">
    <original>S</original>
    <variation>L</variation>
    <location>
        <position position="178"/>
    </location>
</feature>
<feature type="sequence variant" id="VAR_039487" description="In GTLMNS; dbSNP:rs146158333." evidence="2">
    <original>T</original>
    <variation>K</variation>
    <location>
        <position position="180"/>
    </location>
</feature>
<feature type="sequence variant" id="VAR_039488" description="In GTLMNS; dbSNP:rs759426055." evidence="32">
    <original>G</original>
    <variation>D</variation>
    <location>
        <position position="186"/>
    </location>
</feature>
<feature type="sequence variant" id="VAR_075941" description="In GTLMNS; associated with deletion of N-566; dbSNP:rs1231715433." evidence="17">
    <original>I</original>
    <variation>T</variation>
    <location>
        <position position="192"/>
    </location>
</feature>
<feature type="sequence variant" id="VAR_075942" description="In GTLMNS." evidence="17">
    <original>T</original>
    <variation>I</variation>
    <location>
        <position position="194"/>
    </location>
</feature>
<feature type="sequence variant" id="VAR_039489" description="In GTLMNS; dbSNP:rs758035631." evidence="4 17">
    <original>R</original>
    <variation>Q</variation>
    <location>
        <position position="209"/>
    </location>
</feature>
<feature type="sequence variant" id="VAR_007113" description="In GTLMNS; dbSNP:rs28936388." evidence="7 30 32 34">
    <original>R</original>
    <variation>W</variation>
    <location>
        <position position="209"/>
    </location>
</feature>
<feature type="sequence variant" id="VAR_088220" description="In GTLMNS; impaired protein structure; dbSNP:rs1238543321." evidence="27">
    <original>G</original>
    <variation>S</variation>
    <location>
        <position position="212"/>
    </location>
</feature>
<feature type="sequence variant" id="VAR_039490" description="In GTLMNS; dbSNP:rs780594361." evidence="34">
    <original>L</original>
    <variation>P</variation>
    <location>
        <position position="215"/>
    </location>
</feature>
<feature type="sequence variant" id="VAR_039491" description="In GTLMNS; dbSNP:rs774753202." evidence="34">
    <original>A</original>
    <variation>T</variation>
    <location>
        <position position="226"/>
    </location>
</feature>
<feature type="sequence variant" id="VAR_039492" description="In GTLMNS; dbSNP:rs375990084." evidence="12">
    <original>G</original>
    <variation>D</variation>
    <location>
        <position position="230"/>
    </location>
</feature>
<feature type="sequence variant" id="VAR_075943" description="In GTLMNS." evidence="17">
    <original>T</original>
    <variation>R</variation>
    <location>
        <position position="235"/>
    </location>
</feature>
<feature type="sequence variant" id="VAR_075944" description="In GTLMNS; dbSNP:rs780461639." evidence="17">
    <original>D</original>
    <variation>N</variation>
    <location>
        <position position="259"/>
    </location>
</feature>
<feature type="sequence variant" id="VAR_039493" description="In GTLMNS; dbSNP:rs914588619." evidence="34">
    <original>R</original>
    <variation>H</variation>
    <location>
        <position position="261"/>
    </location>
</feature>
<feature type="sequence variant" id="VAR_039494" description="In dbSNP:rs1529927." evidence="5 8 14 23 30 31">
    <original>A</original>
    <variation>G</variation>
    <location>
        <position position="264"/>
    </location>
</feature>
<feature type="sequence variant" id="VAR_075945" description="In GTLMNS; dbSNP:rs568513106." evidence="17">
    <original>L</original>
    <variation>P</variation>
    <location>
        <position position="272"/>
    </location>
</feature>
<feature type="sequence variant" id="VAR_039495" description="In GTLMNS; dbSNP:rs1380031877." evidence="10">
    <original>S</original>
    <variation>Y</variation>
    <location>
        <position position="283"/>
    </location>
</feature>
<feature type="sequence variant" id="VAR_039496" description="In GTLMNS; dbSNP:rs1300608983." evidence="4">
    <original>K</original>
    <variation>R</variation>
    <location>
        <position position="284"/>
    </location>
</feature>
<feature type="sequence variant" id="VAR_088221" description="In GTLMNS; dbSNP:rs755069436." evidence="25">
    <original>T</original>
    <variation>K</variation>
    <location>
        <position position="304"/>
    </location>
</feature>
<feature type="sequence variant" id="VAR_075946" description="In GTLMNS; dbSNP:rs755069436." evidence="17">
    <original>T</original>
    <variation>M</variation>
    <location>
        <position position="304"/>
    </location>
</feature>
<feature type="sequence variant" id="VAR_039497" description="In GTLMNS; dbSNP:rs753840283." evidence="3 17">
    <original>T</original>
    <variation>P</variation>
    <location>
        <position position="304"/>
    </location>
</feature>
<feature type="sequence variant" id="VAR_039498" description="In GTLMNS; dbSNP:rs140551719." evidence="4 17">
    <original>A</original>
    <variation>V</variation>
    <location>
        <position position="313"/>
    </location>
</feature>
<feature type="sequence variant" id="VAR_039499" description="In GTLMNS; dbSNP:rs748920885." evidence="7">
    <original>G</original>
    <variation>V</variation>
    <location>
        <position position="316"/>
    </location>
</feature>
<feature type="sequence variant" id="VAR_039500" description="In GTLMNS; dbSNP:rs150046661." evidence="4 17">
    <original>R</original>
    <variation>W</variation>
    <location>
        <position position="321"/>
    </location>
</feature>
<feature type="sequence variant" id="VAR_039501" description="In GTLMNS; dbSNP:rs770702194." evidence="4 17">
    <original>R</original>
    <variation>W</variation>
    <location>
        <position position="334"/>
    </location>
</feature>
<feature type="sequence variant" id="VAR_039502" description="In GTLMNS." evidence="12">
    <original>G</original>
    <variation>A</variation>
    <location>
        <position position="342"/>
    </location>
</feature>
<feature type="sequence variant" id="VAR_007114" description="In GTLMNS; dbSNP:rs121909383." evidence="30 32">
    <original>P</original>
    <variation>L</variation>
    <location>
        <position position="349"/>
    </location>
</feature>
<feature type="sequence variant" id="VAR_088222" description="In GTLMNS; uncertain significance; dbSNP:rs181865675." evidence="24">
    <original>N</original>
    <variation>K</variation>
    <location>
        <position position="359"/>
    </location>
</feature>
<feature type="sequence variant" id="VAR_075947" description="In GTLMNS; dbSNP:rs773669504." evidence="17">
    <original>G</original>
    <variation>E</variation>
    <location>
        <position position="374"/>
    </location>
</feature>
<feature type="sequence variant" id="VAR_039503" description="In GTLMNS; dbSNP:rs773669504." evidence="7">
    <original>G</original>
    <variation>V</variation>
    <location>
        <position position="374"/>
    </location>
</feature>
<feature type="sequence variant" id="VAR_075948" description="In GTLMNS; dbSNP:rs187885782." evidence="17">
    <original>T</original>
    <variation>M</variation>
    <location>
        <position position="382"/>
    </location>
</feature>
<feature type="sequence variant" id="VAR_075949" description="In GTLMNS; complete loss Na(+) uptake activity; partial loss of localization at the plasma membrane; dbSNP:rs748575829." evidence="17">
    <original>T</original>
    <variation>I</variation>
    <location>
        <position position="392"/>
    </location>
</feature>
<feature type="sequence variant" id="VAR_039504" description="In GTLMNS; dbSNP:rs775931992." evidence="4 17">
    <original>R</original>
    <variation>C</variation>
    <location>
        <position position="399"/>
    </location>
</feature>
<feature type="sequence variant" id="VAR_007115" description="In GTLMNS; dbSNP:rs28936387." evidence="30">
    <original>C</original>
    <variation>R</variation>
    <location>
        <position position="421"/>
    </location>
</feature>
<feature type="sequence variant" id="VAR_075950" description="In GTLMNS." evidence="17">
    <original>QHSC</original>
    <variation>L</variation>
    <location>
        <begin position="433"/>
        <end position="436"/>
    </location>
</feature>
<feature type="sequence variant" id="VAR_039505" description="In GTLMNS; does not affect MAPK1/3 (ERK1/2) phosphorylation in response to IL18; dbSNP:rs759377924." evidence="3 17 19 32">
    <original>G</original>
    <variation>S</variation>
    <location>
        <position position="439"/>
    </location>
</feature>
<feature type="sequence variant" id="VAR_075951" description="In GTLMNS; 68% residual Na(+) uptake activity; partial loss of localization at the plasma membrane." evidence="17">
    <original>N</original>
    <variation>S</variation>
    <location>
        <position position="442"/>
    </location>
</feature>
<feature type="sequence variant" id="VAR_039506" description="In GTLMNS; dbSNP:rs1375515522." evidence="7">
    <original>G</original>
    <variation>E</variation>
    <location>
        <position position="463"/>
    </location>
</feature>
<feature type="sequence variant" id="VAR_075952" description="In GTLMNS; dbSNP:rs374163823." evidence="17">
    <original>G</original>
    <variation>R</variation>
    <location>
        <position position="463"/>
    </location>
</feature>
<feature type="sequence variant" id="VAR_039507" description="In GTLMNS; dbSNP:rs201945662." evidence="7 17">
    <original>A</original>
    <variation>T</variation>
    <location>
        <position position="464"/>
    </location>
</feature>
<feature type="sequence variant" id="VAR_075953" description="In GTLMNS; 40% residual Na(+) uptake activity; increased MAPK1/3 (ERK1/2) phosphorylation in response to IL18; no effect on localization at the plasma membrane; dbSNP:rs373017321." evidence="17 19">
    <original>S</original>
    <variation>C</variation>
    <location>
        <position position="475"/>
    </location>
</feature>
<feature type="sequence variant" id="VAR_039508" description="In GTLMNS; dbSNP:rs1355705043." evidence="32">
    <original>K</original>
    <variation>E</variation>
    <location>
        <position position="478"/>
    </location>
</feature>
<feature type="sequence variant" id="VAR_007116" description="In GTLMNS; dbSNP:rs753523115." evidence="23 24 30 32">
    <original>D</original>
    <variation>N</variation>
    <location>
        <position position="486"/>
    </location>
</feature>
<feature type="sequence variant" id="VAR_075954" description="In GTLMNS; 48% residual Na(+) uptake activity; no effect on localization at the plasma membrane; dbSNP:rs2144714194." evidence="17">
    <original>Y</original>
    <variation>H</variation>
    <location>
        <position position="489"/>
    </location>
</feature>
<feature type="sequence variant" id="VAR_007117" description="In GTLMNS; dbSNP:rs777612082." evidence="30 32">
    <original>G</original>
    <variation>C</variation>
    <location>
        <position position="496"/>
    </location>
</feature>
<feature type="sequence variant" id="VAR_075955" description="In GTLMNS; dbSNP:rs369510226." evidence="17">
    <original>R</original>
    <variation>C</variation>
    <location>
        <position position="507"/>
    </location>
</feature>
<feature type="sequence variant" id="VAR_075956" description="In GTLMNS; dbSNP:rs781137708." evidence="17">
    <original>A</original>
    <variation>T</variation>
    <location>
        <position position="523"/>
    </location>
</feature>
<feature type="sequence variant" id="VAR_075957" description="In GTLMNS; dbSNP:rs780433336." evidence="17">
    <original>N</original>
    <variation>S</variation>
    <location>
        <position position="534"/>
    </location>
</feature>
<feature type="sequence variant" id="VAR_075958" description="In GTLMNS; dbSNP:rs748650798." evidence="17">
    <original>F</original>
    <variation>L</variation>
    <location>
        <position position="536"/>
    </location>
</feature>
<feature type="sequence variant" id="VAR_088223" description="In GTLMNS; uncertain significance." evidence="24">
    <original>L</original>
    <variation>F</variation>
    <location>
        <position position="537"/>
    </location>
</feature>
<feature type="sequence variant" id="VAR_039509" description="In GTLMNS; dbSNP:rs574357286." evidence="32">
    <original>L</original>
    <variation>P</variation>
    <location>
        <position position="542"/>
    </location>
</feature>
<feature type="sequence variant" id="VAR_075959" description="In GTLMNS; dbSNP:rs1451284628." evidence="17">
    <original>S</original>
    <variation>G</variation>
    <location>
        <position position="546"/>
    </location>
</feature>
<feature type="sequence variant" id="VAR_039510" description="In GTLMNS; dbSNP:rs148038173." evidence="4 17">
    <original>S</original>
    <variation>L</variation>
    <location>
        <position position="555"/>
    </location>
</feature>
<feature type="sequence variant" id="VAR_039511" description="In GTLMNS; dbSNP:rs1402444800." evidence="34">
    <original>P</original>
    <variation>H</variation>
    <location>
        <position position="560"/>
    </location>
</feature>
<feature type="sequence variant" id="VAR_075960" description="In GTLMNS; dbSNP:rs1402444800." evidence="17">
    <original>P</original>
    <variation>R</variation>
    <location>
        <position position="560"/>
    </location>
</feature>
<feature type="sequence variant" id="VAR_007118" description="In GTLMNS." evidence="30">
    <location>
        <position position="561"/>
    </location>
</feature>
<feature type="sequence variant" id="VAR_075961" description="In GTLMNS; associated with T-192." evidence="17">
    <location>
        <position position="566"/>
    </location>
</feature>
<feature type="sequence variant" id="VAR_039512" description="In GTLMNS; dbSNP:rs79351185." evidence="2">
    <original>A</original>
    <variation>E</variation>
    <location>
        <position position="569"/>
    </location>
</feature>
<feature type="sequence variant" id="VAR_039513" description="In GTLMNS; dbSNP:rs79351185." evidence="9">
    <original>A</original>
    <variation>V</variation>
    <location>
        <position position="569"/>
    </location>
</feature>
<feature type="sequence variant" id="VAR_039514" description="In GTLMNS; dbSNP:rs139329616." evidence="2">
    <original>V</original>
    <variation>M</variation>
    <location>
        <position position="578"/>
    </location>
</feature>
<feature type="sequence variant" id="VAR_007119" description="In GTLMNS; dbSNP:rs121909382." evidence="30 32">
    <original>A</original>
    <variation>V</variation>
    <location>
        <position position="588"/>
    </location>
</feature>
<feature type="sequence variant" id="VAR_039515" description="In GTLMNS; dbSNP:rs1222807128." evidence="34">
    <original>G</original>
    <variation>S</variation>
    <location>
        <position position="613"/>
    </location>
</feature>
<feature type="sequence variant" id="VAR_039516" description="In GTLMNS; dbSNP:rs779160677." evidence="4 7 17">
    <original>S</original>
    <variation>L</variation>
    <location>
        <position position="615"/>
    </location>
</feature>
<feature type="sequence variant" id="VAR_039517" description="In GTLMNS; dbSNP:rs779160677." evidence="7">
    <original>S</original>
    <variation>W</variation>
    <location>
        <position position="615"/>
    </location>
</feature>
<feature type="sequence variant" id="VAR_039518" description="In GTLMNS; dbSNP:rs121909385." evidence="6 33">
    <original>L</original>
    <variation>P</variation>
    <location>
        <position position="623"/>
    </location>
</feature>
<feature type="sequence variant" id="VAR_007120" description="In GTLMNS; dbSNP:rs121909384." evidence="30">
    <original>G</original>
    <variation>V</variation>
    <location>
        <position position="630"/>
    </location>
</feature>
<feature type="sequence variant" id="VAR_039519" description="In GTLMNS; dbSNP:rs200697179." evidence="2 9 17">
    <original>R</original>
    <variation>C</variation>
    <location>
        <position position="642"/>
    </location>
</feature>
<feature type="sequence variant" id="VAR_039520" description="In GTLMNS; dbSNP:rs200697179." evidence="4 7 17">
    <original>R</original>
    <variation>G</variation>
    <location>
        <position position="642"/>
    </location>
</feature>
<feature type="sequence variant" id="VAR_039521" description="In GTLMNS; dbSNP:rs147901432." evidence="7 17 34">
    <original>R</original>
    <variation>H</variation>
    <location>
        <position position="642"/>
    </location>
</feature>
<feature type="sequence variant" id="VAR_039522" description="In GTLMNS; dbSNP:rs140012781." evidence="4 5 17">
    <original>P</original>
    <variation>L</variation>
    <location>
        <position position="643"/>
    </location>
</feature>
<feature type="sequence variant" id="VAR_075962" description="In GTLMNS." evidence="17">
    <original>V</original>
    <variation>M</variation>
    <location>
        <position position="647"/>
    </location>
</feature>
<feature type="sequence variant" id="VAR_039523" description="In GTLMNS." evidence="34">
    <original>T</original>
    <variation>R</variation>
    <location>
        <position position="649"/>
    </location>
</feature>
<feature type="sequence variant" id="VAR_039524" description="In GTLMNS; dbSNP:rs747249619." evidence="34">
    <original>R</original>
    <variation>C</variation>
    <location>
        <position position="655"/>
    </location>
</feature>
<feature type="sequence variant" id="VAR_007121" description="In GTLMNS; dbSNP:rs121909380." evidence="17 30">
    <original>R</original>
    <variation>H</variation>
    <location>
        <position position="655"/>
    </location>
</feature>
<feature type="sequence variant" id="VAR_007122" description="In GTLMNS; dbSNP:rs121909380." evidence="30">
    <original>R</original>
    <variation>L</variation>
    <location>
        <position position="655"/>
    </location>
</feature>
<feature type="sequence variant" id="VAR_039525" description="In GTLMNS." evidence="11">
    <original>M</original>
    <variation>I</variation>
    <location>
        <position position="672"/>
    </location>
</feature>
<feature type="sequence variant" id="VAR_039526" description="In GTLMNS." evidence="12">
    <original>V</original>
    <variation>L</variation>
    <location>
        <position position="677"/>
    </location>
</feature>
<feature type="sequence variant" id="VAR_039527" description="In GTLMNS; dbSNP:rs771326058." evidence="7">
    <original>V</original>
    <variation>M</variation>
    <location>
        <position position="677"/>
    </location>
</feature>
<feature type="sequence variant" id="VAR_075963" description="In GTLMNS." evidence="17">
    <original>I</original>
    <variation>IKAFYSDVI</variation>
    <location>
        <position position="713"/>
    </location>
</feature>
<feature type="sequence variant" id="VAR_007123" description="In dbSNP:rs36049418." evidence="14 30">
    <original>A</original>
    <variation>T</variation>
    <location>
        <position position="728"/>
    </location>
</feature>
<feature type="sequence variant" id="VAR_039528" description="In GTLMNS; dbSNP:rs373901523." evidence="4 17">
    <original>G</original>
    <variation>V</variation>
    <location>
        <position position="729"/>
    </location>
</feature>
<feature type="sequence variant" id="VAR_039529" description="In GTLMNS; dbSNP:rs752101663." evidence="3 32">
    <original>G</original>
    <variation>R</variation>
    <location>
        <position position="731"/>
    </location>
</feature>
<feature type="sequence variant" id="VAR_075964" description="In GTLMNS; dbSNP:rs757761069." evidence="17">
    <original>P</original>
    <variation>R</variation>
    <location>
        <position position="735"/>
    </location>
</feature>
<feature type="sequence variant" id="VAR_039530" description="In GTLMNS; dbSNP:rs2144733006." evidence="34">
    <original>L</original>
    <variation>R</variation>
    <location>
        <position position="738"/>
    </location>
</feature>
<feature type="sequence variant" id="VAR_007124" description="In GTLMNS; dbSNP:rs138977195." evidence="3 17 30 34">
    <original>G</original>
    <variation>R</variation>
    <location>
        <position position="741"/>
    </location>
</feature>
<feature type="sequence variant" id="VAR_075965" description="In GTLMNS; 54% residual Na(+) uptake activity; no effect on localization at the plasma membrane; dbSNP:rs368068353." evidence="17">
    <original>P</original>
    <variation>L</variation>
    <location>
        <position position="751"/>
    </location>
</feature>
<feature type="sequence variant" id="VAR_075966" description="In GTLMNS; dbSNP:rs146845953." evidence="17">
    <original>S</original>
    <variation>T</variation>
    <location>
        <position position="824"/>
    </location>
</feature>
<feature type="sequence variant" id="VAR_075967" description="In GTLMNS; dbSNP:rs1298687889." evidence="17 24">
    <original>D</original>
    <variation>N</variation>
    <location>
        <position position="839"/>
    </location>
</feature>
<feature type="sequence variant" id="VAR_075968" description="In GTLMNS." evidence="17">
    <original>L</original>
    <variation>F</variation>
    <location>
        <position position="849"/>
    </location>
</feature>
<feature type="sequence variant" id="VAR_039531" description="In GTLMNS; dbSNP:rs185927948." evidence="2 9 13">
    <original>L</original>
    <variation>H</variation>
    <location>
        <position position="849"/>
    </location>
</feature>
<feature type="sequence variant" id="VAR_007125" description="In GTLMNS; dbSNP:rs121909379." evidence="17 30 34">
    <original>L</original>
    <variation>P</variation>
    <location>
        <position position="850"/>
    </location>
</feature>
<feature type="sequence variant" id="VAR_039532" description="In GTLMNS; dbSNP:rs373899077." evidence="7 17 21 34">
    <original>R</original>
    <variation>C</variation>
    <location>
        <position position="852"/>
    </location>
</feature>
<feature type="sequence variant" id="VAR_039533" description="In GTLMNS; dbSNP:rs751929135." evidence="13">
    <original>R</original>
    <variation>H</variation>
    <location>
        <position position="852"/>
    </location>
</feature>
<feature type="sequence variant" id="VAR_039534" description="In GTLMNS; dbSNP:rs373899077." evidence="7">
    <original>R</original>
    <variation>S</variation>
    <location>
        <position position="852"/>
    </location>
</feature>
<feature type="sequence variant" id="VAR_060106" description="In dbSNP:rs8060046.">
    <original>R</original>
    <variation>K</variation>
    <location>
        <position position="854"/>
    </location>
</feature>
<feature type="sequence variant" id="VAR_075969" description="In GTLMNS; dbSNP:rs754505583." evidence="17">
    <original>R</original>
    <variation>C</variation>
    <location>
        <position position="862"/>
    </location>
</feature>
<feature type="sequence variant" id="VAR_039535" description="In GTLMNS; dbSNP:rs370301695." evidence="12">
    <original>G</original>
    <variation>S</variation>
    <location>
        <position position="867"/>
    </location>
</feature>
<feature type="sequence variant" id="VAR_039536" description="In GTLMNS." evidence="10">
    <original>R</original>
    <variation>H</variation>
    <location>
        <position position="871"/>
    </location>
</feature>
<feature type="sequence variant" id="VAR_075970" description="In GTLMNS; dbSNP:rs752124879." evidence="17">
    <original>M</original>
    <variation>T</variation>
    <location>
        <position position="872"/>
    </location>
</feature>
<feature type="sequence variant" id="VAR_075971" description="In GTLMNS; dbSNP:rs369360334." evidence="17">
    <original>R</original>
    <variation>Q</variation>
    <location>
        <position position="887"/>
    </location>
</feature>
<feature type="sequence variant" id="VAR_039537" description="In dbSNP:rs11643718." evidence="3 7 14 34">
    <original>R</original>
    <variation>Q</variation>
    <location>
        <position position="904"/>
    </location>
</feature>
<feature type="sequence variant" id="VAR_039538" description="Increases sodium transport; dbSNP:rs12708965." evidence="14 34">
    <original>R</original>
    <variation>C</variation>
    <location>
        <position position="919"/>
    </location>
</feature>
<feature type="sequence variant" id="VAR_075972" description="In GTLMNS; dbSNP:rs201721269." evidence="17">
    <original>R</original>
    <variation>W</variation>
    <location>
        <position position="934"/>
    </location>
</feature>
<feature type="sequence variant" id="VAR_075973" description="In GTLMNS; uncertain significance; dbSNP:rs56125220." evidence="17">
    <original>R</original>
    <variation>W</variation>
    <location>
        <position position="935"/>
    </location>
</feature>
<feature type="sequence variant" id="VAR_007126" description="In GTLMNS; dbSNP:rs202114767." evidence="17 30">
    <original>R</original>
    <variation>Q</variation>
    <location>
        <position position="955"/>
    </location>
</feature>
<feature type="sequence variant" id="VAR_039539" description="In GTLMNS; dbSNP:rs773428143." evidence="7 17">
    <original>R</original>
    <variation>G</variation>
    <location>
        <position position="958"/>
    </location>
</feature>
<feature type="sequence variant" id="VAR_075974" description="In GTLMNS; dbSNP:rs34803727." evidence="17">
    <original>G</original>
    <variation>R</variation>
    <location>
        <position position="980"/>
    </location>
</feature>
<feature type="sequence variant" id="VAR_039540" description="In GTLMNS; dbSNP:rs199849117." evidence="7 17">
    <original>C</original>
    <variation>Y</variation>
    <location>
        <position position="985"/>
    </location>
</feature>
<feature type="sequence variant" id="VAR_075975" description="In GTLMNS; dbSNP:rs370175770." evidence="17">
    <original>R</original>
    <variation>Q</variation>
    <location>
        <position position="1009"/>
    </location>
</feature>
<feature type="sequence variant" id="VAR_088224" description="In GTLMNS; uncertain significance." evidence="24">
    <original>G</original>
    <variation>R</variation>
    <location>
        <position position="1010"/>
    </location>
</feature>
<feature type="sequence variant" id="VAR_075976" description="In GTLMNS; 58% residual Na(+) uptake activity; decreased MAPK1/3 (ERK1/2) phosphorylation in response to IL18; partial loss of localization at the plasma membrane; dbSNP:rs762026283." evidence="17">
    <original>Q</original>
    <variation>R</variation>
    <location>
        <position position="1021"/>
    </location>
</feature>
<feature type="mutagenesis site" description="Abolished interaction with OXSR1/OSR1 and STK39/SPAK, preventing phosphorylation and activation." evidence="15">
    <original>R</original>
    <variation>A</variation>
    <location>
        <position position="19"/>
    </location>
</feature>
<feature type="mutagenesis site" description="Decreased phosphorylation by OXSR1/OSR1 and STK39/SPAK." evidence="15">
    <original>T</original>
    <variation>A</variation>
    <location>
        <position position="46"/>
    </location>
</feature>
<feature type="mutagenesis site" description="Decreased phosphorylation by OXSR1/OSR1 and STK39/SPAK." evidence="15">
    <original>T</original>
    <variation>A</variation>
    <location>
        <position position="55"/>
    </location>
</feature>
<feature type="mutagenesis site" description="Decreased phosphorylation by OXSR1/OSR1 and STK39/SPAK." evidence="15">
    <original>T</original>
    <variation>A</variation>
    <location>
        <position position="60"/>
    </location>
</feature>
<feature type="mutagenesis site" description="Abolished sodium and chloride ion cotransporter activity." evidence="29">
    <original>D</original>
    <variation>A</variation>
    <location>
        <position position="62"/>
    </location>
</feature>
<feature type="mutagenesis site" description="Abolished sodium and chloride ion cotransporter activity." evidence="29">
    <original>Y</original>
    <variation>A</variation>
    <location>
        <position position="70"/>
    </location>
</feature>
<feature type="mutagenesis site" description="Abolished sodium and chloride ion cotransporter activity." evidence="29">
    <original>R</original>
    <variation>A</variation>
    <location>
        <position position="83"/>
    </location>
</feature>
<feature type="mutagenesis site" description="Abolished sodium and chloride ion cotransporter activity." evidence="29">
    <original>L</original>
    <variation>A</variation>
    <location>
        <position position="86"/>
    </location>
</feature>
<feature type="mutagenesis site" description="Decreased phosphorylation by OXSR1/OSR1 and STK39/SPAK." evidence="15">
    <original>S</original>
    <variation>A</variation>
    <location>
        <position position="91"/>
    </location>
</feature>
<feature type="mutagenesis site" description="Reduced sensitivity to thiazide diuretics. Reduced sodium and chloride ion cotransporter activity." evidence="26 29">
    <original>N</original>
    <variation>A</variation>
    <location>
        <position position="149"/>
    </location>
</feature>
<feature type="mutagenesis site" description="Strongly reduced sodium and chloride ion cotransporter activity." evidence="29">
    <original>R</original>
    <variation>A</variation>
    <location>
        <position position="158"/>
    </location>
</feature>
<feature type="mutagenesis site" description="Reduced sensitivity to thiazide diuretics." evidence="29">
    <original>F</original>
    <variation>A</variation>
    <location>
        <position position="223"/>
    </location>
</feature>
<feature type="mutagenesis site" description="Strongly reduced sodium and chloride ion cotransporter activity." evidence="26">
    <original>N</original>
    <variation>A</variation>
    <location>
        <position position="227"/>
    </location>
</feature>
<feature type="mutagenesis site" description="Strongly reduced sodium and chloride ion cotransporter activity." evidence="26">
    <original>H</original>
    <variation>A</variation>
    <variation>Y</variation>
    <location>
        <position position="234"/>
    </location>
</feature>
<feature type="mutagenesis site" description="Strongly reduced sodium and chloride ion cotransporter activity." evidence="29">
    <original>E</original>
    <variation>A</variation>
    <location>
        <position position="240"/>
    </location>
</feature>
<feature type="mutagenesis site" description="Strongly reduced sodium and chloride ion cotransporter activity." evidence="26">
    <original>Y</original>
    <variation>A</variation>
    <location>
        <position position="386"/>
    </location>
</feature>
<feature type="mutagenesis site" description="Abolished sodium and chloride ion cotransporter activity." evidence="26 29">
    <original>S</original>
    <variation>A</variation>
    <location>
        <position position="467"/>
    </location>
</feature>
<feature type="mutagenesis site" description="Abolished sodium and chloride ion cotransporter activity." evidence="26 29">
    <original>S</original>
    <variation>A</variation>
    <location>
        <position position="468"/>
    </location>
</feature>
<feature type="mutagenesis site" description="Strongly reduced sodium and chloride ion cotransporter activity." evidence="29">
    <original>N</original>
    <variation>A</variation>
    <location>
        <position position="526"/>
    </location>
</feature>
<feature type="mutagenesis site" description="Abolished sodium and chloride ion cotransporter activity." evidence="26 29">
    <original>Y</original>
    <variation>A</variation>
    <location>
        <position position="540"/>
    </location>
</feature>
<feature type="mutagenesis site" description="Reduced sodium and chloride ion cotransporter activity." evidence="29">
    <original>F</original>
    <variation>A</variation>
    <location>
        <position position="765"/>
    </location>
</feature>
<feature type="mutagenesis site" description="Abolished sodium and chloride ion cotransporter activity." evidence="29">
    <original>D</original>
    <variation>A</variation>
    <location>
        <position position="838"/>
    </location>
</feature>
<feature type="mutagenesis site" description="Reduced sodium and chloride ion cotransporter activity." evidence="29">
    <original>F</original>
    <variation>A</variation>
    <location>
        <position position="886"/>
    </location>
</feature>
<feature type="mutagenesis site" description="Abolished sodium and chloride ion cotransporter activity." evidence="29">
    <original>R</original>
    <variation>A</variation>
    <location>
        <position position="1009"/>
    </location>
</feature>
<feature type="sequence conflict" description="In Ref. 2; CAA62613." evidence="39" ref="2">
    <original>AG</original>
    <variation>VV</variation>
    <location>
        <begin position="459"/>
        <end position="460"/>
    </location>
</feature>
<feature type="sequence conflict" description="In Ref. 3; AK315298." evidence="39" ref="3">
    <original>S</original>
    <variation>P</variation>
    <location>
        <position position="539"/>
    </location>
</feature>
<feature type="sequence conflict" description="In Ref. 1; AAC50355." evidence="39" ref="1">
    <original>D</original>
    <variation>E</variation>
    <location>
        <position position="766"/>
    </location>
</feature>
<feature type="sequence conflict" description="In Ref. 3; AK315298." evidence="39" ref="3">
    <location>
        <position position="778"/>
    </location>
</feature>
<feature type="turn" evidence="56">
    <location>
        <begin position="68"/>
        <end position="70"/>
    </location>
</feature>
<feature type="helix" evidence="56">
    <location>
        <begin position="86"/>
        <end position="90"/>
    </location>
</feature>
<feature type="helix" evidence="57">
    <location>
        <begin position="138"/>
        <end position="141"/>
    </location>
</feature>
<feature type="helix" evidence="57">
    <location>
        <begin position="143"/>
        <end position="150"/>
    </location>
</feature>
<feature type="helix" evidence="57">
    <location>
        <begin position="154"/>
        <end position="157"/>
    </location>
</feature>
<feature type="helix" evidence="57">
    <location>
        <begin position="159"/>
        <end position="165"/>
    </location>
</feature>
<feature type="helix" evidence="57">
    <location>
        <begin position="167"/>
        <end position="193"/>
    </location>
</feature>
<feature type="helix" evidence="58">
    <location>
        <begin position="202"/>
        <end position="204"/>
    </location>
</feature>
<feature type="helix" evidence="57">
    <location>
        <begin position="205"/>
        <end position="211"/>
    </location>
</feature>
<feature type="helix" evidence="57">
    <location>
        <begin position="213"/>
        <end position="249"/>
    </location>
</feature>
<feature type="strand" evidence="56">
    <location>
        <begin position="253"/>
        <end position="255"/>
    </location>
</feature>
<feature type="helix" evidence="57">
    <location>
        <begin position="258"/>
        <end position="263"/>
    </location>
</feature>
<feature type="helix" evidence="57">
    <location>
        <begin position="265"/>
        <end position="276"/>
    </location>
</feature>
<feature type="helix" evidence="57">
    <location>
        <begin position="280"/>
        <end position="303"/>
    </location>
</feature>
<feature type="helix" evidence="57">
    <location>
        <begin position="310"/>
        <end position="314"/>
    </location>
</feature>
<feature type="helix" evidence="57">
    <location>
        <begin position="322"/>
        <end position="327"/>
    </location>
</feature>
<feature type="strand" evidence="57">
    <location>
        <begin position="335"/>
        <end position="337"/>
    </location>
</feature>
<feature type="helix" evidence="57">
    <location>
        <begin position="340"/>
        <end position="347"/>
    </location>
</feature>
<feature type="helix" evidence="57">
    <location>
        <begin position="348"/>
        <end position="350"/>
    </location>
</feature>
<feature type="turn" evidence="57">
    <location>
        <begin position="354"/>
        <end position="360"/>
    </location>
</feature>
<feature type="helix" evidence="57">
    <location>
        <begin position="361"/>
        <end position="363"/>
    </location>
</feature>
<feature type="helix" evidence="57">
    <location>
        <begin position="367"/>
        <end position="393"/>
    </location>
</feature>
<feature type="turn" evidence="57">
    <location>
        <begin position="394"/>
        <end position="396"/>
    </location>
</feature>
<feature type="strand" evidence="54">
    <location>
        <begin position="411"/>
        <end position="413"/>
    </location>
</feature>
<feature type="helix" evidence="57">
    <location>
        <begin position="419"/>
        <end position="423"/>
    </location>
</feature>
<feature type="helix" evidence="57">
    <location>
        <begin position="428"/>
        <end position="433"/>
    </location>
</feature>
<feature type="turn" evidence="57">
    <location>
        <begin position="440"/>
        <end position="442"/>
    </location>
</feature>
<feature type="helix" evidence="57">
    <location>
        <begin position="446"/>
        <end position="450"/>
    </location>
</feature>
<feature type="strand" evidence="57">
    <location>
        <begin position="451"/>
        <end position="453"/>
    </location>
</feature>
<feature type="helix" evidence="57">
    <location>
        <begin position="455"/>
        <end position="483"/>
    </location>
</feature>
<feature type="strand" evidence="54">
    <location>
        <begin position="489"/>
        <end position="491"/>
    </location>
</feature>
<feature type="helix" evidence="57">
    <location>
        <begin position="493"/>
        <end position="495"/>
    </location>
</feature>
<feature type="turn" evidence="57">
    <location>
        <begin position="501"/>
        <end position="503"/>
    </location>
</feature>
<feature type="helix" evidence="57">
    <location>
        <begin position="506"/>
        <end position="522"/>
    </location>
</feature>
<feature type="turn" evidence="57">
    <location>
        <begin position="526"/>
        <end position="528"/>
    </location>
</feature>
<feature type="helix" evidence="57">
    <location>
        <begin position="529"/>
        <end position="552"/>
    </location>
</feature>
<feature type="helix" evidence="57">
    <location>
        <begin position="567"/>
        <end position="584"/>
    </location>
</feature>
<feature type="helix" evidence="57">
    <location>
        <begin position="586"/>
        <end position="604"/>
    </location>
</feature>
<feature type="helix" evidence="56">
    <location>
        <begin position="615"/>
        <end position="630"/>
    </location>
</feature>
<feature type="helix" evidence="56">
    <location>
        <begin position="631"/>
        <end position="633"/>
    </location>
</feature>
<feature type="strand" evidence="56">
    <location>
        <begin position="645"/>
        <end position="648"/>
    </location>
</feature>
<feature type="helix" evidence="56">
    <location>
        <begin position="652"/>
        <end position="654"/>
    </location>
</feature>
<feature type="helix" evidence="56">
    <location>
        <begin position="656"/>
        <end position="665"/>
    </location>
</feature>
<feature type="turn" evidence="56">
    <location>
        <begin position="666"/>
        <end position="669"/>
    </location>
</feature>
<feature type="strand" evidence="56">
    <location>
        <begin position="672"/>
        <end position="675"/>
    </location>
</feature>
<feature type="strand" evidence="56">
    <location>
        <begin position="677"/>
        <end position="681"/>
    </location>
</feature>
<feature type="helix" evidence="56">
    <location>
        <begin position="688"/>
        <end position="702"/>
    </location>
</feature>
<feature type="strand" evidence="56">
    <location>
        <begin position="712"/>
        <end position="716"/>
    </location>
</feature>
<feature type="helix" evidence="56">
    <location>
        <begin position="717"/>
        <end position="727"/>
    </location>
</feature>
<feature type="strand" evidence="56">
    <location>
        <begin position="737"/>
        <end position="740"/>
    </location>
</feature>
<feature type="turn" evidence="56">
    <location>
        <begin position="744"/>
        <end position="748"/>
    </location>
</feature>
<feature type="helix" evidence="56">
    <location>
        <begin position="751"/>
        <end position="766"/>
    </location>
</feature>
<feature type="strand" evidence="56">
    <location>
        <begin position="770"/>
        <end position="775"/>
    </location>
</feature>
<feature type="helix" evidence="56">
    <location>
        <begin position="821"/>
        <end position="823"/>
    </location>
</feature>
<feature type="strand" evidence="56">
    <location>
        <begin position="830"/>
        <end position="835"/>
    </location>
</feature>
<feature type="helix" evidence="56">
    <location>
        <begin position="842"/>
        <end position="851"/>
    </location>
</feature>
<feature type="helix" evidence="56">
    <location>
        <begin position="854"/>
        <end position="856"/>
    </location>
</feature>
<feature type="strand" evidence="56">
    <location>
        <begin position="860"/>
        <end position="865"/>
    </location>
</feature>
<feature type="helix" evidence="55">
    <location>
        <begin position="869"/>
        <end position="871"/>
    </location>
</feature>
<feature type="helix" evidence="56">
    <location>
        <begin position="872"/>
        <end position="879"/>
    </location>
</feature>
<feature type="helix" evidence="56">
    <location>
        <begin position="881"/>
        <end position="884"/>
    </location>
</feature>
<feature type="turn" evidence="56">
    <location>
        <begin position="885"/>
        <end position="887"/>
    </location>
</feature>
<feature type="strand" evidence="56">
    <location>
        <begin position="899"/>
        <end position="901"/>
    </location>
</feature>
<feature type="helix" evidence="56">
    <location>
        <begin position="905"/>
        <end position="915"/>
    </location>
</feature>
<feature type="helix" evidence="56">
    <location>
        <begin position="916"/>
        <end position="918"/>
    </location>
</feature>
<feature type="helix" evidence="56">
    <location>
        <begin position="927"/>
        <end position="934"/>
    </location>
</feature>
<feature type="strand" evidence="55">
    <location>
        <begin position="938"/>
        <end position="940"/>
    </location>
</feature>
<feature type="helix" evidence="56">
    <location>
        <begin position="943"/>
        <end position="947"/>
    </location>
</feature>
<feature type="helix" evidence="56">
    <location>
        <begin position="950"/>
        <end position="966"/>
    </location>
</feature>
<feature type="turn" evidence="56">
    <location>
        <begin position="967"/>
        <end position="969"/>
    </location>
</feature>
<feature type="strand" evidence="56">
    <location>
        <begin position="971"/>
        <end position="976"/>
    </location>
</feature>
<feature type="turn" evidence="56">
    <location>
        <begin position="982"/>
        <end position="984"/>
    </location>
</feature>
<feature type="helix" evidence="56">
    <location>
        <begin position="987"/>
        <end position="996"/>
    </location>
</feature>
<feature type="strand" evidence="56">
    <location>
        <begin position="998"/>
        <end position="1000"/>
    </location>
</feature>
<feature type="strand" evidence="56">
    <location>
        <begin position="1005"/>
        <end position="1009"/>
    </location>
</feature>
<accession>P55017</accession>
<accession>A8MSJ2</accession>
<accession>C9JNN9</accession>
<protein>
    <recommendedName>
        <fullName>Solute carrier family 12 member 3</fullName>
    </recommendedName>
    <alternativeName>
        <fullName evidence="36">Na-Cl cotransporter</fullName>
        <shortName evidence="36">NCC</shortName>
    </alternativeName>
    <alternativeName>
        <fullName>Na-Cl symporter</fullName>
    </alternativeName>
    <alternativeName>
        <fullName>Thiazide-sensitive sodium-chloride cotransporter</fullName>
    </alternativeName>
</protein>
<comment type="function">
    <text evidence="1 15 16 17 26 29">Electroneutral sodium and chloride ion cotransporter, which acts as a key mediator of sodium and chloride reabsorption in kidney distal convoluted tubules (PubMed:18270262, PubMed:21613606, PubMed:22009145, PubMed:36351028, PubMed:36792826). Also acts as a receptor for the pro-inflammatory cytokine IL18, thereby contributing to IL18-induced cytokine production, including IFNG, IL6, IL18 and CCL2 (By similarity). May act either independently of IL18R1, or in a complex with IL18R1 (By similarity).</text>
</comment>
<comment type="catalytic activity">
    <reaction evidence="26 29">
        <text>chloride(out) + Na(+)(out) = chloride(in) + Na(+)(in)</text>
        <dbReference type="Rhea" id="RHEA:73887"/>
        <dbReference type="ChEBI" id="CHEBI:17996"/>
        <dbReference type="ChEBI" id="CHEBI:29101"/>
    </reaction>
</comment>
<comment type="activity regulation">
    <text evidence="15 16 29 30">Phosphorylation by OXSR1/OSR1 and STK39/SPAK in kidney distal convoluted tubules downstream of WNK4 promotes its activity (PubMed:18270262). Also activated by OXSR1/OSR1 and STK39/SPAK downstream of WNK3 (PubMed:21613606). Target of thiazide diuretics used in the treatment of high blood pressure (PubMed:36792826, PubMed:8528245). Thiazide drugs, such as polythiazide, specifically inhibit SLC12A3/NCC transporter activity by competing with chloride for binding and by locking SLC12A3/NCC in an outward-facing conformation (PubMed:36792826).</text>
</comment>
<comment type="subunit">
    <text evidence="1 18 26 29">Homodimer; adopts a domain-swap conformation at the scissor helices connecting the transmembrane domain and C-terminal domain (PubMed:36351028, PubMed:36792826). Interacts with KLHL3 (PubMed:22406640). Interacts with IL18R1; this interaction is increased by IL18 treatment (By similarity).</text>
</comment>
<comment type="subcellular location">
    <subcellularLocation>
        <location evidence="17 27">Cell membrane</location>
        <topology evidence="26 29">Multi-pass membrane protein</topology>
    </subcellularLocation>
    <subcellularLocation>
        <location evidence="1">Apical cell membrane</location>
        <topology evidence="26 29">Multi-pass membrane protein</topology>
    </subcellularLocation>
</comment>
<comment type="alternative products">
    <event type="alternative splicing"/>
    <isoform>
        <id>P55017-1</id>
        <name>1</name>
        <sequence type="displayed"/>
    </isoform>
    <isoform>
        <id>P55017-2</id>
        <name>2</name>
        <sequence type="described" ref="VSP_036318"/>
    </isoform>
    <isoform>
        <id>P55017-3</id>
        <name>3</name>
        <sequence type="described" ref="VSP_040100 VSP_036318"/>
    </isoform>
</comment>
<comment type="tissue specificity">
    <text evidence="19 20 31">Predominantly expressed in the kidney (at protein level) (PubMed:29993276, PubMed:8812482). Localizes to the distal convoluted tubules (at protein level) (PubMed:29993276). Not detected in normal aorta, but abundantly expressed in fatty streaks and advanced atherosclerotic lesions (at protein level) (PubMed:26099046).</text>
</comment>
<comment type="domain">
    <text evidence="29">Interaction between the cytoplasmic N-terminal and C-terminal domains (NTD and CTD, respectively) is essential for SLC12A3/NCC transporter activity (PubMed:36792826). Phosphorylation by OXSR1/OSR1 and STK39/SPAK may activate SLC12A3/NCC by facilitating this interaction (PubMed:36792826).</text>
</comment>
<comment type="PTM">
    <text evidence="18">Ubiquitinated; ubiquitination is essential for regulation of endocytosis. The BCR(KLHL3) complex was initially identified as a candidate ubiquitin ligase for SLC12A3 (PubMed:22406640). However, it was later shown that it is not the case.</text>
</comment>
<comment type="PTM">
    <text evidence="1 15">Phosphorylated at Thr-46, Thr-55, Thr-60 and Ser-91 by OXSR1/OSR1 and STK39/SPAK downstream of WNK4, promoting its activity (PubMed:18270262). Phosphorylated in response to IL18 (By similarity).</text>
</comment>
<comment type="disease" evidence="2 3 4 5 6 7 9 10 11 12 13 17 19 21 22 23 24 25 27 28 30 32 33 34">
    <disease id="DI-00510">
        <name>Gitelman syndrome</name>
        <acronym>GTLMNS</acronym>
        <description>An autosomal recessive disorder characterized by hypokalemic alkalosis in combination with hypomagnesemia, low urinary calcium, and increased renin activity associated with normal blood pressure. Patients are often asymptomatic or present transient periods of muscular weakness and tetany, usually accompanied by abdominal pain, vomiting and fever. The phenotype is highly heterogeneous in terms of age at onset and severity. Cardinal features such as hypocalciuria and hypomagnesemia might also change during the life cycle of a given patient. It has overlapping features with Bartter syndrome.</description>
        <dbReference type="MIM" id="263800"/>
    </disease>
    <text>The disease is caused by variants affecting the gene represented in this entry.</text>
</comment>
<comment type="similarity">
    <text evidence="39">Belongs to the SLC12A transporter family.</text>
</comment>
<dbReference type="EMBL" id="U44128">
    <property type="protein sequence ID" value="AAC50355.1"/>
    <property type="molecule type" value="mRNA"/>
</dbReference>
<dbReference type="EMBL" id="X91220">
    <property type="protein sequence ID" value="CAA62613.1"/>
    <property type="molecule type" value="mRNA"/>
</dbReference>
<dbReference type="EMBL" id="AK315298">
    <property type="status" value="NOT_ANNOTATED_CDS"/>
    <property type="molecule type" value="mRNA"/>
</dbReference>
<dbReference type="EMBL" id="AC012181">
    <property type="status" value="NOT_ANNOTATED_CDS"/>
    <property type="molecule type" value="Genomic_DNA"/>
</dbReference>
<dbReference type="CCDS" id="CCDS10770.1">
    <molecule id="P55017-2"/>
</dbReference>
<dbReference type="CCDS" id="CCDS45491.1">
    <molecule id="P55017-3"/>
</dbReference>
<dbReference type="CCDS" id="CCDS58464.1">
    <molecule id="P55017-1"/>
</dbReference>
<dbReference type="PIR" id="G01202">
    <property type="entry name" value="G01202"/>
</dbReference>
<dbReference type="PIR" id="PC4180">
    <property type="entry name" value="PC4180"/>
</dbReference>
<dbReference type="RefSeq" id="NP_000330.3">
    <molecule id="P55017-2"/>
    <property type="nucleotide sequence ID" value="NM_000339.3"/>
</dbReference>
<dbReference type="RefSeq" id="NP_001119579.2">
    <molecule id="P55017-3"/>
    <property type="nucleotide sequence ID" value="NM_001126107.2"/>
</dbReference>
<dbReference type="RefSeq" id="NP_001119580.2">
    <molecule id="P55017-1"/>
    <property type="nucleotide sequence ID" value="NM_001126108.2"/>
</dbReference>
<dbReference type="PDB" id="7Y6I">
    <property type="method" value="EM"/>
    <property type="resolution" value="2.85 A"/>
    <property type="chains" value="A/B=1-1021"/>
</dbReference>
<dbReference type="PDB" id="7YG0">
    <property type="method" value="EM"/>
    <property type="resolution" value="3.75 A"/>
    <property type="chains" value="A/B=1-1021"/>
</dbReference>
<dbReference type="PDB" id="7YG1">
    <property type="method" value="EM"/>
    <property type="resolution" value="3.77 A"/>
    <property type="chains" value="A/B=1-1021"/>
</dbReference>
<dbReference type="PDB" id="8FHN">
    <property type="method" value="EM"/>
    <property type="resolution" value="3.00 A"/>
    <property type="chains" value="A/B/C=132-263, A/B/C=265-1021"/>
</dbReference>
<dbReference type="PDB" id="8FHO">
    <property type="method" value="EM"/>
    <property type="resolution" value="2.95 A"/>
    <property type="chains" value="A/B/C=132-263, A/B/C=265-1021"/>
</dbReference>
<dbReference type="PDB" id="8FHP">
    <property type="method" value="EM"/>
    <property type="resolution" value="3.04 A"/>
    <property type="chains" value="A/B=132-263, A/B=265-1021"/>
</dbReference>
<dbReference type="PDB" id="8FHQ">
    <property type="method" value="EM"/>
    <property type="resolution" value="2.81 A"/>
    <property type="chains" value="A/B=132-263, A/B=265-1021"/>
</dbReference>
<dbReference type="PDB" id="8FHR">
    <property type="method" value="EM"/>
    <property type="resolution" value="2.90 A"/>
    <property type="chains" value="A/B=132-263, A/B=265-1021"/>
</dbReference>
<dbReference type="PDB" id="8FHT">
    <property type="method" value="EM"/>
    <property type="resolution" value="3.02 A"/>
    <property type="chains" value="A/B=1-1021"/>
</dbReference>
<dbReference type="PDBsum" id="7Y6I"/>
<dbReference type="PDBsum" id="7YG0"/>
<dbReference type="PDBsum" id="7YG1"/>
<dbReference type="PDBsum" id="8FHN"/>
<dbReference type="PDBsum" id="8FHO"/>
<dbReference type="PDBsum" id="8FHP"/>
<dbReference type="PDBsum" id="8FHQ"/>
<dbReference type="PDBsum" id="8FHR"/>
<dbReference type="PDBsum" id="8FHT"/>
<dbReference type="EMDB" id="EMD-29096"/>
<dbReference type="EMDB" id="EMD-29097"/>
<dbReference type="EMDB" id="EMD-29098"/>
<dbReference type="EMDB" id="EMD-29099"/>
<dbReference type="EMDB" id="EMD-29100"/>
<dbReference type="EMDB" id="EMD-29103"/>
<dbReference type="EMDB" id="EMD-33641"/>
<dbReference type="EMDB" id="EMD-33803"/>
<dbReference type="EMDB" id="EMD-33804"/>
<dbReference type="SMR" id="P55017"/>
<dbReference type="BioGRID" id="112448">
    <property type="interactions" value="20"/>
</dbReference>
<dbReference type="CORUM" id="P55017"/>
<dbReference type="ELM" id="P55017"/>
<dbReference type="FunCoup" id="P55017">
    <property type="interactions" value="184"/>
</dbReference>
<dbReference type="IntAct" id="P55017">
    <property type="interactions" value="8"/>
</dbReference>
<dbReference type="STRING" id="9606.ENSP00000402152"/>
<dbReference type="ChEMBL" id="CHEMBL1876"/>
<dbReference type="DrugBank" id="DB00436">
    <property type="generic name" value="Bendroflumethiazide"/>
</dbReference>
<dbReference type="DrugBank" id="DB00562">
    <property type="generic name" value="Benzthiazide"/>
</dbReference>
<dbReference type="DrugBank" id="DB00880">
    <property type="generic name" value="Chlorothiazide"/>
</dbReference>
<dbReference type="DrugBank" id="DB00999">
    <property type="generic name" value="Hydrochlorothiazide"/>
</dbReference>
<dbReference type="DrugBank" id="DB00808">
    <property type="generic name" value="Indapamide"/>
</dbReference>
<dbReference type="DrugBank" id="DB00524">
    <property type="generic name" value="Metolazone"/>
</dbReference>
<dbReference type="DrugBank" id="DB01324">
    <property type="generic name" value="Polythiazide"/>
</dbReference>
<dbReference type="DrugBank" id="DB01325">
    <property type="generic name" value="Quinethazone"/>
</dbReference>
<dbReference type="DrugBank" id="DB01021">
    <property type="generic name" value="Trichlormethiazide"/>
</dbReference>
<dbReference type="DrugCentral" id="P55017"/>
<dbReference type="TCDB" id="2.A.30.1.12">
    <property type="family name" value="the cation-chloride cotransporter (ccc) family"/>
</dbReference>
<dbReference type="GlyCosmos" id="P55017">
    <property type="glycosylation" value="2 sites, No reported glycans"/>
</dbReference>
<dbReference type="GlyGen" id="P55017">
    <property type="glycosylation" value="3 sites"/>
</dbReference>
<dbReference type="iPTMnet" id="P55017"/>
<dbReference type="PhosphoSitePlus" id="P55017"/>
<dbReference type="BioMuta" id="SLC12A3"/>
<dbReference type="DMDM" id="313104194"/>
<dbReference type="jPOST" id="P55017"/>
<dbReference type="MassIVE" id="P55017"/>
<dbReference type="PaxDb" id="9606-ENSP00000402152"/>
<dbReference type="PeptideAtlas" id="P55017"/>
<dbReference type="ProteomicsDB" id="56759">
    <molecule id="P55017-1"/>
</dbReference>
<dbReference type="ProteomicsDB" id="56760">
    <molecule id="P55017-2"/>
</dbReference>
<dbReference type="ProteomicsDB" id="56761">
    <molecule id="P55017-3"/>
</dbReference>
<dbReference type="Antibodypedia" id="28680">
    <property type="antibodies" value="227 antibodies from 22 providers"/>
</dbReference>
<dbReference type="DNASU" id="6559"/>
<dbReference type="Ensembl" id="ENST00000438926.6">
    <molecule id="P55017-2"/>
    <property type="protein sequence ID" value="ENSP00000402152.2"/>
    <property type="gene ID" value="ENSG00000070915.10"/>
</dbReference>
<dbReference type="Ensembl" id="ENST00000563236.6">
    <molecule id="P55017-1"/>
    <property type="protein sequence ID" value="ENSP00000456149.2"/>
    <property type="gene ID" value="ENSG00000070915.10"/>
</dbReference>
<dbReference type="Ensembl" id="ENST00000566786.5">
    <molecule id="P55017-3"/>
    <property type="protein sequence ID" value="ENSP00000457552.1"/>
    <property type="gene ID" value="ENSG00000070915.10"/>
</dbReference>
<dbReference type="GeneID" id="6559"/>
<dbReference type="KEGG" id="hsa:6559"/>
<dbReference type="MANE-Select" id="ENST00000563236.6">
    <property type="protein sequence ID" value="ENSP00000456149.2"/>
    <property type="RefSeq nucleotide sequence ID" value="NM_001126108.2"/>
    <property type="RefSeq protein sequence ID" value="NP_001119580.2"/>
</dbReference>
<dbReference type="UCSC" id="uc002ekd.4">
    <molecule id="P55017-1"/>
    <property type="organism name" value="human"/>
</dbReference>
<dbReference type="AGR" id="HGNC:10912"/>
<dbReference type="CTD" id="6559"/>
<dbReference type="DisGeNET" id="6559"/>
<dbReference type="GeneCards" id="SLC12A3"/>
<dbReference type="HGNC" id="HGNC:10912">
    <property type="gene designation" value="SLC12A3"/>
</dbReference>
<dbReference type="HPA" id="ENSG00000070915">
    <property type="expression patterns" value="Tissue enriched (kidney)"/>
</dbReference>
<dbReference type="MalaCards" id="SLC12A3"/>
<dbReference type="MIM" id="263800">
    <property type="type" value="phenotype"/>
</dbReference>
<dbReference type="MIM" id="600968">
    <property type="type" value="gene"/>
</dbReference>
<dbReference type="neXtProt" id="NX_P55017"/>
<dbReference type="OpenTargets" id="ENSG00000070915"/>
<dbReference type="Orphanet" id="358">
    <property type="disease" value="Gitelman syndrome"/>
</dbReference>
<dbReference type="PharmGKB" id="PA321"/>
<dbReference type="VEuPathDB" id="HostDB:ENSG00000070915"/>
<dbReference type="eggNOG" id="KOG2083">
    <property type="taxonomic scope" value="Eukaryota"/>
</dbReference>
<dbReference type="GeneTree" id="ENSGT00940000155044"/>
<dbReference type="InParanoid" id="P55017"/>
<dbReference type="OMA" id="PWMITEQ"/>
<dbReference type="OrthoDB" id="2020542at2759"/>
<dbReference type="PAN-GO" id="P55017">
    <property type="GO annotations" value="9 GO annotations based on evolutionary models"/>
</dbReference>
<dbReference type="PhylomeDB" id="P55017"/>
<dbReference type="TreeFam" id="TF313191"/>
<dbReference type="PathwayCommons" id="P55017"/>
<dbReference type="Reactome" id="R-HSA-426117">
    <property type="pathway name" value="Cation-coupled Chloride cotransporters"/>
</dbReference>
<dbReference type="Reactome" id="R-HSA-5619087">
    <property type="pathway name" value="Defective SLC12A3 causes Gitelman syndrome (GS)"/>
</dbReference>
<dbReference type="SignaLink" id="P55017"/>
<dbReference type="SIGNOR" id="P55017"/>
<dbReference type="BioGRID-ORCS" id="6559">
    <property type="hits" value="10 hits in 1161 CRISPR screens"/>
</dbReference>
<dbReference type="ChiTaRS" id="SLC12A3">
    <property type="organism name" value="human"/>
</dbReference>
<dbReference type="GeneWiki" id="Sodium-chloride_symporter"/>
<dbReference type="GenomeRNAi" id="6559"/>
<dbReference type="Pharos" id="P55017">
    <property type="development level" value="Tclin"/>
</dbReference>
<dbReference type="PRO" id="PR:P55017"/>
<dbReference type="Proteomes" id="UP000005640">
    <property type="component" value="Chromosome 16"/>
</dbReference>
<dbReference type="RNAct" id="P55017">
    <property type="molecule type" value="protein"/>
</dbReference>
<dbReference type="Bgee" id="ENSG00000070915">
    <property type="expression patterns" value="Expressed in adult mammalian kidney and 62 other cell types or tissues"/>
</dbReference>
<dbReference type="ExpressionAtlas" id="P55017">
    <property type="expression patterns" value="baseline and differential"/>
</dbReference>
<dbReference type="GO" id="GO:0016324">
    <property type="term" value="C:apical plasma membrane"/>
    <property type="evidence" value="ECO:0000314"/>
    <property type="project" value="MGI"/>
</dbReference>
<dbReference type="GO" id="GO:0005829">
    <property type="term" value="C:cytosol"/>
    <property type="evidence" value="ECO:0007669"/>
    <property type="project" value="Ensembl"/>
</dbReference>
<dbReference type="GO" id="GO:0070062">
    <property type="term" value="C:extracellular exosome"/>
    <property type="evidence" value="ECO:0000314"/>
    <property type="project" value="UniProtKB"/>
</dbReference>
<dbReference type="GO" id="GO:0016020">
    <property type="term" value="C:membrane"/>
    <property type="evidence" value="ECO:0000304"/>
    <property type="project" value="ProtInc"/>
</dbReference>
<dbReference type="GO" id="GO:0005886">
    <property type="term" value="C:plasma membrane"/>
    <property type="evidence" value="ECO:0000314"/>
    <property type="project" value="UniProtKB"/>
</dbReference>
<dbReference type="GO" id="GO:0005524">
    <property type="term" value="F:ATP binding"/>
    <property type="evidence" value="ECO:0007669"/>
    <property type="project" value="UniProtKB-KW"/>
</dbReference>
<dbReference type="GO" id="GO:0015378">
    <property type="term" value="F:sodium:chloride symporter activity"/>
    <property type="evidence" value="ECO:0000314"/>
    <property type="project" value="UniProtKB"/>
</dbReference>
<dbReference type="GO" id="GO:0008511">
    <property type="term" value="F:sodium:potassium:chloride symporter activity"/>
    <property type="evidence" value="ECO:0000318"/>
    <property type="project" value="GO_Central"/>
</dbReference>
<dbReference type="GO" id="GO:0006884">
    <property type="term" value="P:cell volume homeostasis"/>
    <property type="evidence" value="ECO:0000318"/>
    <property type="project" value="GO_Central"/>
</dbReference>
<dbReference type="GO" id="GO:0055064">
    <property type="term" value="P:chloride ion homeostasis"/>
    <property type="evidence" value="ECO:0000318"/>
    <property type="project" value="GO_Central"/>
</dbReference>
<dbReference type="GO" id="GO:1902476">
    <property type="term" value="P:chloride transmembrane transport"/>
    <property type="evidence" value="ECO:0000318"/>
    <property type="project" value="GO_Central"/>
</dbReference>
<dbReference type="GO" id="GO:0006811">
    <property type="term" value="P:monoatomic ion transport"/>
    <property type="evidence" value="ECO:0000304"/>
    <property type="project" value="Reactome"/>
</dbReference>
<dbReference type="GO" id="GO:0055075">
    <property type="term" value="P:potassium ion homeostasis"/>
    <property type="evidence" value="ECO:0000318"/>
    <property type="project" value="GO_Central"/>
</dbReference>
<dbReference type="GO" id="GO:1990573">
    <property type="term" value="P:potassium ion import across plasma membrane"/>
    <property type="evidence" value="ECO:0000318"/>
    <property type="project" value="GO_Central"/>
</dbReference>
<dbReference type="GO" id="GO:0070294">
    <property type="term" value="P:renal sodium ion absorption"/>
    <property type="evidence" value="ECO:0000314"/>
    <property type="project" value="UniProt"/>
</dbReference>
<dbReference type="GO" id="GO:1904044">
    <property type="term" value="P:response to aldosterone"/>
    <property type="evidence" value="ECO:0007669"/>
    <property type="project" value="Ensembl"/>
</dbReference>
<dbReference type="GO" id="GO:1902074">
    <property type="term" value="P:response to salt"/>
    <property type="evidence" value="ECO:0007669"/>
    <property type="project" value="Ensembl"/>
</dbReference>
<dbReference type="GO" id="GO:0055078">
    <property type="term" value="P:sodium ion homeostasis"/>
    <property type="evidence" value="ECO:0000318"/>
    <property type="project" value="GO_Central"/>
</dbReference>
<dbReference type="GO" id="GO:0035725">
    <property type="term" value="P:sodium ion transmembrane transport"/>
    <property type="evidence" value="ECO:0000250"/>
    <property type="project" value="BHF-UCL"/>
</dbReference>
<dbReference type="GO" id="GO:0006814">
    <property type="term" value="P:sodium ion transport"/>
    <property type="evidence" value="ECO:0000250"/>
    <property type="project" value="UniProtKB"/>
</dbReference>
<dbReference type="FunFam" id="1.20.1740.10:FF:000018">
    <property type="entry name" value="solute carrier family 12 member 3 isoform X2"/>
    <property type="match status" value="1"/>
</dbReference>
<dbReference type="Gene3D" id="1.20.1740.10">
    <property type="entry name" value="Amino acid/polyamine transporter I"/>
    <property type="match status" value="1"/>
</dbReference>
<dbReference type="InterPro" id="IPR004841">
    <property type="entry name" value="AA-permease/SLC12A_dom"/>
</dbReference>
<dbReference type="InterPro" id="IPR013612">
    <property type="entry name" value="AA_permease_N"/>
</dbReference>
<dbReference type="InterPro" id="IPR018491">
    <property type="entry name" value="SLC12_C"/>
</dbReference>
<dbReference type="InterPro" id="IPR002948">
    <property type="entry name" value="SLC12A3"/>
</dbReference>
<dbReference type="InterPro" id="IPR004842">
    <property type="entry name" value="SLC12A_fam"/>
</dbReference>
<dbReference type="NCBIfam" id="TIGR00930">
    <property type="entry name" value="2a30"/>
    <property type="match status" value="1"/>
</dbReference>
<dbReference type="PANTHER" id="PTHR11827:SF9">
    <property type="entry name" value="SOLUTE CARRIER FAMILY 12 MEMBER 3"/>
    <property type="match status" value="1"/>
</dbReference>
<dbReference type="PANTHER" id="PTHR11827">
    <property type="entry name" value="SOLUTE CARRIER FAMILY 12, CATION COTRANSPORTERS"/>
    <property type="match status" value="1"/>
</dbReference>
<dbReference type="Pfam" id="PF00324">
    <property type="entry name" value="AA_permease"/>
    <property type="match status" value="1"/>
</dbReference>
<dbReference type="Pfam" id="PF08403">
    <property type="entry name" value="AA_permease_N"/>
    <property type="match status" value="1"/>
</dbReference>
<dbReference type="Pfam" id="PF03522">
    <property type="entry name" value="SLC12"/>
    <property type="match status" value="2"/>
</dbReference>
<dbReference type="PRINTS" id="PR01230">
    <property type="entry name" value="NACLTRNSPORT"/>
</dbReference>
<evidence type="ECO:0000250" key="1">
    <source>
        <dbReference type="UniProtKB" id="P59158"/>
    </source>
</evidence>
<evidence type="ECO:0000269" key="2">
    <source>
    </source>
</evidence>
<evidence type="ECO:0000269" key="3">
    <source>
    </source>
</evidence>
<evidence type="ECO:0000269" key="4">
    <source>
    </source>
</evidence>
<evidence type="ECO:0000269" key="5">
    <source>
    </source>
</evidence>
<evidence type="ECO:0000269" key="6">
    <source>
    </source>
</evidence>
<evidence type="ECO:0000269" key="7">
    <source>
    </source>
</evidence>
<evidence type="ECO:0000269" key="8">
    <source>
    </source>
</evidence>
<evidence type="ECO:0000269" key="9">
    <source>
    </source>
</evidence>
<evidence type="ECO:0000269" key="10">
    <source>
    </source>
</evidence>
<evidence type="ECO:0000269" key="11">
    <source>
    </source>
</evidence>
<evidence type="ECO:0000269" key="12">
    <source>
    </source>
</evidence>
<evidence type="ECO:0000269" key="13">
    <source>
    </source>
</evidence>
<evidence type="ECO:0000269" key="14">
    <source>
    </source>
</evidence>
<evidence type="ECO:0000269" key="15">
    <source>
    </source>
</evidence>
<evidence type="ECO:0000269" key="16">
    <source>
    </source>
</evidence>
<evidence type="ECO:0000269" key="17">
    <source>
    </source>
</evidence>
<evidence type="ECO:0000269" key="18">
    <source>
    </source>
</evidence>
<evidence type="ECO:0000269" key="19">
    <source>
    </source>
</evidence>
<evidence type="ECO:0000269" key="20">
    <source>
    </source>
</evidence>
<evidence type="ECO:0000269" key="21">
    <source>
    </source>
</evidence>
<evidence type="ECO:0000269" key="22">
    <source>
    </source>
</evidence>
<evidence type="ECO:0000269" key="23">
    <source>
    </source>
</evidence>
<evidence type="ECO:0000269" key="24">
    <source>
    </source>
</evidence>
<evidence type="ECO:0000269" key="25">
    <source>
    </source>
</evidence>
<evidence type="ECO:0000269" key="26">
    <source>
    </source>
</evidence>
<evidence type="ECO:0000269" key="27">
    <source>
    </source>
</evidence>
<evidence type="ECO:0000269" key="28">
    <source>
    </source>
</evidence>
<evidence type="ECO:0000269" key="29">
    <source>
    </source>
</evidence>
<evidence type="ECO:0000269" key="30">
    <source>
    </source>
</evidence>
<evidence type="ECO:0000269" key="31">
    <source>
    </source>
</evidence>
<evidence type="ECO:0000269" key="32">
    <source>
    </source>
</evidence>
<evidence type="ECO:0000269" key="33">
    <source>
    </source>
</evidence>
<evidence type="ECO:0000269" key="34">
    <source>
    </source>
</evidence>
<evidence type="ECO:0000303" key="35">
    <source>
    </source>
</evidence>
<evidence type="ECO:0000303" key="36">
    <source>
    </source>
</evidence>
<evidence type="ECO:0000303" key="37">
    <source>
    </source>
</evidence>
<evidence type="ECO:0000303" key="38">
    <source>
    </source>
</evidence>
<evidence type="ECO:0000305" key="39"/>
<evidence type="ECO:0000305" key="40">
    <source>
    </source>
</evidence>
<evidence type="ECO:0000305" key="41">
    <source>
    </source>
</evidence>
<evidence type="ECO:0000305" key="42">
    <source>
    </source>
</evidence>
<evidence type="ECO:0000312" key="43">
    <source>
        <dbReference type="HGNC" id="HGNC:10912"/>
    </source>
</evidence>
<evidence type="ECO:0007744" key="44">
    <source>
        <dbReference type="PDB" id="7Y6I"/>
    </source>
</evidence>
<evidence type="ECO:0007744" key="45">
    <source>
        <dbReference type="PDB" id="7YG0"/>
    </source>
</evidence>
<evidence type="ECO:0007744" key="46">
    <source>
        <dbReference type="PDB" id="7YG1"/>
    </source>
</evidence>
<evidence type="ECO:0007744" key="47">
    <source>
        <dbReference type="PDB" id="8FHN"/>
    </source>
</evidence>
<evidence type="ECO:0007744" key="48">
    <source>
        <dbReference type="PDB" id="8FHO"/>
    </source>
</evidence>
<evidence type="ECO:0007744" key="49">
    <source>
        <dbReference type="PDB" id="8FHP"/>
    </source>
</evidence>
<evidence type="ECO:0007744" key="50">
    <source>
        <dbReference type="PDB" id="8FHQ"/>
    </source>
</evidence>
<evidence type="ECO:0007744" key="51">
    <source>
        <dbReference type="PDB" id="8FHR"/>
    </source>
</evidence>
<evidence type="ECO:0007744" key="52">
    <source>
        <dbReference type="PDB" id="8FHT"/>
    </source>
</evidence>
<evidence type="ECO:0007744" key="53">
    <source>
    </source>
</evidence>
<evidence type="ECO:0007829" key="54">
    <source>
        <dbReference type="PDB" id="7Y6I"/>
    </source>
</evidence>
<evidence type="ECO:0007829" key="55">
    <source>
        <dbReference type="PDB" id="8FHN"/>
    </source>
</evidence>
<evidence type="ECO:0007829" key="56">
    <source>
        <dbReference type="PDB" id="8FHO"/>
    </source>
</evidence>
<evidence type="ECO:0007829" key="57">
    <source>
        <dbReference type="PDB" id="8FHQ"/>
    </source>
</evidence>
<evidence type="ECO:0007829" key="58">
    <source>
        <dbReference type="PDB" id="8FHR"/>
    </source>
</evidence>
<organism>
    <name type="scientific">Homo sapiens</name>
    <name type="common">Human</name>
    <dbReference type="NCBI Taxonomy" id="9606"/>
    <lineage>
        <taxon>Eukaryota</taxon>
        <taxon>Metazoa</taxon>
        <taxon>Chordata</taxon>
        <taxon>Craniata</taxon>
        <taxon>Vertebrata</taxon>
        <taxon>Euteleostomi</taxon>
        <taxon>Mammalia</taxon>
        <taxon>Eutheria</taxon>
        <taxon>Euarchontoglires</taxon>
        <taxon>Primates</taxon>
        <taxon>Haplorrhini</taxon>
        <taxon>Catarrhini</taxon>
        <taxon>Hominidae</taxon>
        <taxon>Homo</taxon>
    </lineage>
</organism>
<proteinExistence type="evidence at protein level"/>
<name>S12A3_HUMAN</name>